<accession>Q15233</accession>
<accession>B7Z4C2</accession>
<accession>D3DVV4</accession>
<accession>F5GYZ3</accession>
<accession>O00201</accession>
<accession>P30807</accession>
<accession>Q12786</accession>
<accession>Q9BQC5</accession>
<evidence type="ECO:0000250" key="1">
    <source>
        <dbReference type="UniProtKB" id="Q99K48"/>
    </source>
</evidence>
<evidence type="ECO:0000255" key="2"/>
<evidence type="ECO:0000255" key="3">
    <source>
        <dbReference type="PROSITE-ProRule" id="PRU00176"/>
    </source>
</evidence>
<evidence type="ECO:0000256" key="4">
    <source>
        <dbReference type="SAM" id="MobiDB-lite"/>
    </source>
</evidence>
<evidence type="ECO:0000269" key="5">
    <source>
    </source>
</evidence>
<evidence type="ECO:0000269" key="6">
    <source>
    </source>
</evidence>
<evidence type="ECO:0000269" key="7">
    <source>
    </source>
</evidence>
<evidence type="ECO:0000269" key="8">
    <source>
    </source>
</evidence>
<evidence type="ECO:0000269" key="9">
    <source>
    </source>
</evidence>
<evidence type="ECO:0000269" key="10">
    <source>
    </source>
</evidence>
<evidence type="ECO:0000269" key="11">
    <source>
    </source>
</evidence>
<evidence type="ECO:0000269" key="12">
    <source>
    </source>
</evidence>
<evidence type="ECO:0000269" key="13">
    <source>
    </source>
</evidence>
<evidence type="ECO:0000269" key="14">
    <source>
    </source>
</evidence>
<evidence type="ECO:0000269" key="15">
    <source>
    </source>
</evidence>
<evidence type="ECO:0000269" key="16">
    <source>
    </source>
</evidence>
<evidence type="ECO:0000269" key="17">
    <source>
    </source>
</evidence>
<evidence type="ECO:0000269" key="18">
    <source>
    </source>
</evidence>
<evidence type="ECO:0000269" key="19">
    <source>
    </source>
</evidence>
<evidence type="ECO:0000269" key="20">
    <source>
    </source>
</evidence>
<evidence type="ECO:0000269" key="21">
    <source>
    </source>
</evidence>
<evidence type="ECO:0000303" key="22">
    <source>
    </source>
</evidence>
<evidence type="ECO:0000303" key="23">
    <source>
    </source>
</evidence>
<evidence type="ECO:0000303" key="24">
    <source>
    </source>
</evidence>
<evidence type="ECO:0000303" key="25">
    <source>
    </source>
</evidence>
<evidence type="ECO:0000305" key="26"/>
<evidence type="ECO:0000312" key="27">
    <source>
        <dbReference type="HGNC" id="HGNC:7871"/>
    </source>
</evidence>
<evidence type="ECO:0007744" key="28">
    <source>
    </source>
</evidence>
<evidence type="ECO:0007744" key="29">
    <source>
    </source>
</evidence>
<evidence type="ECO:0007744" key="30">
    <source>
    </source>
</evidence>
<evidence type="ECO:0007744" key="31">
    <source>
    </source>
</evidence>
<evidence type="ECO:0007744" key="32">
    <source>
    </source>
</evidence>
<evidence type="ECO:0007744" key="33">
    <source>
    </source>
</evidence>
<evidence type="ECO:0007744" key="34">
    <source>
    </source>
</evidence>
<evidence type="ECO:0007744" key="35">
    <source>
    </source>
</evidence>
<evidence type="ECO:0007744" key="36">
    <source>
    </source>
</evidence>
<evidence type="ECO:0007744" key="37">
    <source>
    </source>
</evidence>
<evidence type="ECO:0007744" key="38">
    <source>
    </source>
</evidence>
<evidence type="ECO:0007744" key="39">
    <source>
    </source>
</evidence>
<evidence type="ECO:0007744" key="40">
    <source>
    </source>
</evidence>
<evidence type="ECO:0007744" key="41">
    <source>
    </source>
</evidence>
<evidence type="ECO:0007744" key="42">
    <source>
    </source>
</evidence>
<evidence type="ECO:0007744" key="43">
    <source>
    </source>
</evidence>
<evidence type="ECO:0007829" key="44">
    <source>
        <dbReference type="PDB" id="3SDE"/>
    </source>
</evidence>
<evidence type="ECO:0007829" key="45">
    <source>
        <dbReference type="PDB" id="5IFM"/>
    </source>
</evidence>
<evidence type="ECO:0007829" key="46">
    <source>
        <dbReference type="PDB" id="7LRQ"/>
    </source>
</evidence>
<evidence type="ECO:0007829" key="47">
    <source>
        <dbReference type="PDB" id="7LRU"/>
    </source>
</evidence>
<comment type="function">
    <text evidence="1 5 6 7 8 9 13 15 16 17">DNA- and RNA binding protein, involved in several nuclear processes (PubMed:11525732, PubMed:12403470, PubMed:26571461). Binds the conventional octamer sequence in double-stranded DNA (PubMed:11525732, PubMed:12403470, PubMed:26571461). Also binds single-stranded DNA and RNA at a site independent of the duplex site (PubMed:11525732, PubMed:12403470, PubMed:26571461). Involved in pre-mRNA splicing, probably as a heterodimer with SFPQ (PubMed:11525732, PubMed:12403470, PubMed:26571461). Interacts with U5 snRNA, probably by binding to a purine-rich sequence located on the 3' side of U5 snRNA stem 1b (PubMed:12403470). Together with PSPC1, required for the formation of nuclear paraspeckles (PubMed:22416126). The SFPQ-NONO heteromer associated with MATR3 may play a role in nuclear retention of defective RNAs (PubMed:11525732). The SFPQ-NONO heteromer may be involved in DNA unwinding by modulating the function of topoisomerase I/TOP1 (PubMed:10858305). The SFPQ-NONO heteromer may be involved in DNA non-homologous end joining (NHEJ) required for double-strand break repair and V(D)J recombination and may stabilize paired DNA ends (PubMed:15590677). In vitro, the complex strongly stimulates DNA end joining, binds directly to the DNA substrates and cooperates with the Ku70/G22P1-Ku80/XRCC5 (Ku) dimer to establish a functional preligation complex (PubMed:15590677). NONO is involved in transcriptional regulation. The SFPQ-NONO-NR5A1 complex binds to the CYP17 promoter and regulates basal and cAMP-dependent transcriptional activity (PubMed:11897684). NONO binds to an enhancer element in long terminal repeats of endogenous intracisternal A particles (IAPs) and activates transcription (By similarity). Regulates the circadian clock by repressing the transcriptional activator activity of the CLOCK-BMAL1 heterodimer (By similarity). Important for the functional organization of GABAergic synapses (By similarity). Plays a specific and important role in the regulation of synaptic RNAs and GPHN/gephyrin scaffold structure, through the regulation of GABRA2 transcript (By similarity). Plays a key role during neuronal differentiation by recruiting TET1 to genomic loci and thereby regulating 5-hydroxymethylcytosine levels (By similarity). Plays a role in the regulation of DNA virus-mediated innate immune response by assembling into the HDP-RNP complex, a complex that serves as a platform for IRF3 phosphorylation and subsequent innate immune response activation through the cGAS-STING pathway (PubMed:28712728, PubMed:30270045). Promotes activation of the cGAS-STING pathway in response to HIV-2 infection: acts by interacting with HIV-2 Capsid protein p24, thereby promoting detection of viral DNA by CGAS, leading to CGAS-mediated inmmune activation (PubMed:30270045). In contrast, the weak interaction with HIV-1 Capsid protein p24 does not allow activation of the cGAS-STING pathway (PubMed:30270045).</text>
</comment>
<comment type="subunit">
    <text evidence="1 6 7 8 9 10 11 12 13 14 16 18 21">Monomer and component of the SFPQ-NONO complex, which is probably a heterotetramer of two 52 kDa (NONO) and two 100 kDa (SFPQ) subunits (PubMed:15590677, PubMed:8439294). NONO is a component of spliceosome and U5.4/6 snRNP complexes (PubMed:12403470). Interacts with CPNE4 (via VWFA domain) (By similarity). Forms heterodimers with PSPC1; this involves formation of a coiled coil domain by helices from both proteins (PubMed:16148043, PubMed:22416126). Part of complex consisting of SFPQ, NONO and MATR3 (PubMed:11525732). Part of a complex consisting of SFPQ, NONO and NR5A1 (PubMed:11897684). Part of a complex consisting of SFPQ, NONO and TOP1 (PubMed:9756848). Interacts with SPI1 and SPIB (By similarity). Interacts with RNF43 (PubMed:18655028). Interacts with PER1 and PER2 (By similarity). Part of the HDP-RNP complex composed of at least HEXIM1, PRKDC, XRCC5, XRCC6, paraspeckle proteins (SFPQ, NONO, PSPC1, RBM14, and MATR3) and NEAT1 RNA (PubMed:28712728). Interacts (via second RRM domain) with WASL; the interaction is direct (PubMed:16767080). Component of a multiprotein complex with WASL and SFPQ (PubMed:16767080). Interacts with ERCC6 (PubMed:26030138). Interacts (via DNA-binding domain) with TET1 (By similarity).</text>
</comment>
<comment type="subunit">
    <text evidence="17">(Microbial infection) Interacts with HIV-2 Capsid protein p24; interacts with high affinity (PubMed:30270045). Interacts with HIV-1 Capsid protein p24; interacts with low affinity (PubMed:30270045).</text>
</comment>
<comment type="interaction">
    <interactant intactId="EBI-350527">
        <id>Q15233</id>
    </interactant>
    <interactant intactId="EBI-721765">
        <id>Q9H3H3</id>
        <label>C11orf68</label>
    </interactant>
    <organismsDiffer>false</organismsDiffer>
    <experiments>3</experiments>
</comment>
<comment type="interaction">
    <interactant intactId="EBI-350527">
        <id>Q15233</id>
    </interactant>
    <interactant intactId="EBI-12002214">
        <id>Q9H3H3-3</id>
        <label>C11orf68</label>
    </interactant>
    <organismsDiffer>false</organismsDiffer>
    <experiments>3</experiments>
</comment>
<comment type="interaction">
    <interactant intactId="EBI-350527">
        <id>Q15233</id>
    </interactant>
    <interactant intactId="EBI-1181987">
        <id>Q53ET0</id>
        <label>CRTC2</label>
    </interactant>
    <organismsDiffer>false</organismsDiffer>
    <experiments>2</experiments>
</comment>
<comment type="interaction">
    <interactant intactId="EBI-350527">
        <id>Q15233</id>
    </interactant>
    <interactant intactId="EBI-713291">
        <id>P51114</id>
        <label>FXR1</label>
    </interactant>
    <organismsDiffer>false</organismsDiffer>
    <experiments>2</experiments>
</comment>
<comment type="interaction">
    <interactant intactId="EBI-350527">
        <id>Q15233</id>
    </interactant>
    <interactant intactId="EBI-350527">
        <id>Q15233</id>
        <label>NONO</label>
    </interactant>
    <organismsDiffer>false</organismsDiffer>
    <experiments>6</experiments>
</comment>
<comment type="interaction">
    <interactant intactId="EBI-350527">
        <id>Q15233</id>
    </interactant>
    <interactant intactId="EBI-714158">
        <id>Q13526</id>
        <label>PIN1</label>
    </interactant>
    <organismsDiffer>false</organismsDiffer>
    <experiments>4</experiments>
</comment>
<comment type="interaction">
    <interactant intactId="EBI-350527">
        <id>Q15233</id>
    </interactant>
    <interactant intactId="EBI-1392258">
        <id>Q8WXF1</id>
        <label>PSPC1</label>
    </interactant>
    <organismsDiffer>false</organismsDiffer>
    <experiments>16</experiments>
</comment>
<comment type="interaction">
    <interactant intactId="EBI-350527">
        <id>Q15233</id>
    </interactant>
    <interactant intactId="EBI-15974663">
        <id>Q8WXF1-1</id>
        <label>PSPC1</label>
    </interactant>
    <organismsDiffer>false</organismsDiffer>
    <experiments>7</experiments>
</comment>
<comment type="interaction">
    <interactant intactId="EBI-350527">
        <id>Q15233</id>
    </interactant>
    <interactant intactId="EBI-12135327">
        <id>Q8WXF1-2</id>
        <label>PSPC1</label>
    </interactant>
    <organismsDiffer>false</organismsDiffer>
    <experiments>4</experiments>
</comment>
<comment type="interaction">
    <interactant intactId="EBI-350527">
        <id>Q15233</id>
    </interactant>
    <interactant intactId="EBI-355453">
        <id>P23246</id>
        <label>SFPQ</label>
    </interactant>
    <organismsDiffer>false</organismsDiffer>
    <experiments>10</experiments>
</comment>
<comment type="interaction">
    <interactant intactId="EBI-350527">
        <id>Q15233</id>
    </interactant>
    <interactant intactId="EBI-1185167">
        <id>Q8AZK7</id>
        <label>EBNA-LP</label>
    </interactant>
    <organismsDiffer>true</organismsDiffer>
    <experiments>2</experiments>
</comment>
<comment type="interaction">
    <interactant intactId="EBI-10203843">
        <id>Q15233-2</id>
    </interactant>
    <interactant intactId="EBI-351257">
        <id>P26196</id>
        <label>DDX6</label>
    </interactant>
    <organismsDiffer>false</organismsDiffer>
    <experiments>3</experiments>
</comment>
<comment type="interaction">
    <interactant intactId="EBI-10203843">
        <id>Q15233-2</id>
    </interactant>
    <interactant intactId="EBI-2798728">
        <id>P61968</id>
        <label>LMO4</label>
    </interactant>
    <organismsDiffer>false</organismsDiffer>
    <experiments>3</experiments>
</comment>
<comment type="interaction">
    <interactant intactId="EBI-10203843">
        <id>Q15233-2</id>
    </interactant>
    <interactant intactId="EBI-714158">
        <id>Q13526</id>
        <label>PIN1</label>
    </interactant>
    <organismsDiffer>false</organismsDiffer>
    <experiments>3</experiments>
</comment>
<comment type="interaction">
    <interactant intactId="EBI-10203843">
        <id>Q15233-2</id>
    </interactant>
    <interactant intactId="EBI-1383852">
        <id>P54646</id>
        <label>PRKAA2</label>
    </interactant>
    <organismsDiffer>false</organismsDiffer>
    <experiments>3</experiments>
</comment>
<comment type="interaction">
    <interactant intactId="EBI-10203843">
        <id>Q15233-2</id>
    </interactant>
    <interactant intactId="EBI-1392258">
        <id>Q8WXF1</id>
        <label>PSPC1</label>
    </interactant>
    <organismsDiffer>false</organismsDiffer>
    <experiments>3</experiments>
</comment>
<comment type="subcellular location">
    <subcellularLocation>
        <location evidence="13 16">Nucleus</location>
    </subcellularLocation>
    <subcellularLocation>
        <location>Nucleus</location>
        <location>Nucleolus</location>
    </subcellularLocation>
    <subcellularLocation>
        <location evidence="13 16">Nucleus speckle</location>
    </subcellularLocation>
    <subcellularLocation>
        <location evidence="1">Chromosome</location>
    </subcellularLocation>
    <text evidence="13 16">Detected in punctate subnuclear structures often located adjacent to splicing speckles, called paraspeckles.</text>
</comment>
<comment type="alternative products">
    <event type="alternative splicing"/>
    <isoform>
        <id>Q15233-1</id>
        <name>1</name>
        <sequence type="displayed"/>
    </isoform>
    <isoform>
        <id>Q15233-2</id>
        <name>2</name>
        <sequence type="described" ref="VSP_045470"/>
    </isoform>
</comment>
<comment type="tissue specificity">
    <text evidence="19">Heart, brain, placenta, lung, liver, skeletal muscle, kidney and pancreas. Also found in a number of breast tumor cell lines.</text>
</comment>
<comment type="PTM">
    <text>The N-terminus is blocked.</text>
</comment>
<comment type="disease">
    <text evidence="20">A chromosomal aberration involving NONO may be a cause of papillary renal cell carcinoma (PRCC). Translocation t(X;X)(p11.2;q13.1) with TFE3.</text>
</comment>
<comment type="disease" evidence="15">
    <disease id="DI-04618">
        <name>Intellectual developmental disorder, X-linked, syndromic 34</name>
        <acronym>MRXS34</acronym>
        <description>A syndrome characterized by intellectual deficit, delayed psychomotor development, poor speech, and dysmorphic features.</description>
        <dbReference type="MIM" id="300967"/>
    </disease>
    <text>The disease is caused by variants affecting the gene represented in this entry.</text>
</comment>
<comment type="online information" name="Atlas of Genetics and Cytogenetics in Oncology and Haematology">
    <link uri="https://atlasgeneticsoncology.org/gene/168/NONO"/>
</comment>
<feature type="chain" id="PRO_0000081683" description="Non-POU domain-containing octamer-binding protein">
    <location>
        <begin position="1"/>
        <end position="471"/>
    </location>
</feature>
<feature type="domain" description="RRM 1" evidence="3">
    <location>
        <begin position="74"/>
        <end position="141"/>
    </location>
</feature>
<feature type="domain" description="RRM 2" evidence="3">
    <location>
        <begin position="148"/>
        <end position="229"/>
    </location>
</feature>
<feature type="region of interest" description="Disordered" evidence="4">
    <location>
        <begin position="1"/>
        <end position="51"/>
    </location>
</feature>
<feature type="region of interest" description="DBHS">
    <location>
        <begin position="54"/>
        <end position="373"/>
    </location>
</feature>
<feature type="region of interest" description="Disordered" evidence="4">
    <location>
        <begin position="443"/>
        <end position="471"/>
    </location>
</feature>
<feature type="coiled-coil region" evidence="2">
    <location>
        <begin position="268"/>
        <end position="372"/>
    </location>
</feature>
<feature type="compositionally biased region" description="Polar residues" evidence="4">
    <location>
        <begin position="1"/>
        <end position="10"/>
    </location>
</feature>
<feature type="compositionally biased region" description="Basic residues" evidence="4">
    <location>
        <begin position="14"/>
        <end position="27"/>
    </location>
</feature>
<feature type="site" description="Breakpoint for translocation to form NONO-TFE3">
    <location>
        <begin position="377"/>
        <end position="378"/>
    </location>
</feature>
<feature type="modified residue" description="N-acetylmethionine" evidence="1">
    <location>
        <position position="1"/>
    </location>
</feature>
<feature type="modified residue" description="N6-acetyllysine; alternate" evidence="35">
    <location>
        <position position="5"/>
    </location>
</feature>
<feature type="modified residue" description="Phosphothreonine" evidence="39">
    <location>
        <position position="6"/>
    </location>
</feature>
<feature type="modified residue" description="N6-acetyllysine" evidence="35">
    <location>
        <position position="11"/>
    </location>
</feature>
<feature type="modified residue" description="Phosphoserine" evidence="37">
    <location>
        <position position="147"/>
    </location>
</feature>
<feature type="modified residue" description="N6-acetyllysine; alternate" evidence="35">
    <location>
        <position position="198"/>
    </location>
</feature>
<feature type="modified residue" description="Phosphoserine" evidence="39">
    <location>
        <position position="262"/>
    </location>
</feature>
<feature type="modified residue" description="N6-acetyllysine" evidence="1">
    <location>
        <position position="295"/>
    </location>
</feature>
<feature type="modified residue" description="N6-acetyllysine; alternate" evidence="1">
    <location>
        <position position="371"/>
    </location>
</feature>
<feature type="modified residue" description="Phosphothreonine" evidence="31 34 36">
    <location>
        <position position="428"/>
    </location>
</feature>
<feature type="modified residue" description="Phosphothreonine" evidence="37">
    <location>
        <position position="440"/>
    </location>
</feature>
<feature type="modified residue" description="Phosphothreonine" evidence="28 29 30 31 32 33 34 36 37 38 39 41">
    <location>
        <position position="450"/>
    </location>
</feature>
<feature type="modified residue" description="Omega-N-methylarginine" evidence="40">
    <location>
        <position position="456"/>
    </location>
</feature>
<feature type="cross-link" description="Glycyl lysine isopeptide (Lys-Gly) (interchain with G-Cter in SUMO2); alternate" evidence="42 43">
    <location>
        <position position="5"/>
    </location>
</feature>
<feature type="cross-link" description="Glycyl lysine isopeptide (Lys-Gly) (interchain with G-Cter in SUMO2)" evidence="43">
    <location>
        <position position="60"/>
    </location>
</feature>
<feature type="cross-link" description="Glycyl lysine isopeptide (Lys-Gly) (interchain with G-Cter in SUMO2)" evidence="43">
    <location>
        <position position="96"/>
    </location>
</feature>
<feature type="cross-link" description="Glycyl lysine isopeptide (Lys-Gly) (interchain with G-Cter in SUMO2)" evidence="43">
    <location>
        <position position="99"/>
    </location>
</feature>
<feature type="cross-link" description="Glycyl lysine isopeptide (Lys-Gly) (interchain with G-Cter in SUMO2)" evidence="43">
    <location>
        <position position="126"/>
    </location>
</feature>
<feature type="cross-link" description="Glycyl lysine isopeptide (Lys-Gly) (interchain with G-Cter in SUMO2)" evidence="43">
    <location>
        <position position="190"/>
    </location>
</feature>
<feature type="cross-link" description="Glycyl lysine isopeptide (Lys-Gly) (interchain with G-Cter in SUMO2); alternate" evidence="43">
    <location>
        <position position="198"/>
    </location>
</feature>
<feature type="cross-link" description="Glycyl lysine isopeptide (Lys-Gly) (interchain with G-Cter in SUMO2)" evidence="43">
    <location>
        <position position="243"/>
    </location>
</feature>
<feature type="cross-link" description="Glycyl lysine isopeptide (Lys-Gly) (interchain with G-Cter in SUMO2)" evidence="43">
    <location>
        <position position="249"/>
    </location>
</feature>
<feature type="cross-link" description="Glycyl lysine isopeptide (Lys-Gly) (interchain with G-Cter in SUMO2); alternate" evidence="42 43">
    <location>
        <position position="371"/>
    </location>
</feature>
<feature type="cross-link" description="Glycyl lysine isopeptide (Lys-Gly) (interchain with G-Cter in SUMO2)" evidence="43">
    <location>
        <position position="467"/>
    </location>
</feature>
<feature type="splice variant" id="VSP_045470" description="In isoform 2." evidence="26">
    <location>
        <begin position="1"/>
        <end position="89"/>
    </location>
</feature>
<feature type="mutagenesis site" description="Abolishes interaction with PSPC1 and localization in nuclear paraspeckles; when associated with A-271." evidence="13">
    <original>Y</original>
    <variation>A</variation>
    <location>
        <position position="267"/>
    </location>
</feature>
<feature type="mutagenesis site" description="Abolishes interaction with PSPC1 and localization in nuclear paraspeckles; when associated with A-267." evidence="13">
    <original>W</original>
    <variation>A</variation>
    <location>
        <position position="271"/>
    </location>
</feature>
<feature type="sequence conflict" description="In Ref. 1; AAC37578." evidence="26" ref="1">
    <original>T</original>
    <variation>H</variation>
    <location>
        <position position="151"/>
    </location>
</feature>
<feature type="sequence conflict" description="In Ref. 3; CAA72157 and 4; AAA03427." evidence="26" ref="3 4">
    <original>QQ</original>
    <variation>HE</variation>
    <location>
        <begin position="358"/>
        <end position="359"/>
    </location>
</feature>
<feature type="sequence conflict" description="In Ref. 3; CAA72157 and 4; AAA03427." evidence="26" ref="3 4">
    <original>QQ</original>
    <variation>HE</variation>
    <location>
        <begin position="366"/>
        <end position="367"/>
    </location>
</feature>
<feature type="sequence conflict" description="In Ref. 5; BAH12508." evidence="26" ref="5">
    <original>M</original>
    <variation>I</variation>
    <location>
        <position position="387"/>
    </location>
</feature>
<feature type="strand" evidence="45">
    <location>
        <begin position="55"/>
        <end position="60"/>
    </location>
</feature>
<feature type="helix" evidence="44">
    <location>
        <begin position="72"/>
        <end position="74"/>
    </location>
</feature>
<feature type="strand" evidence="44">
    <location>
        <begin position="75"/>
        <end position="80"/>
    </location>
</feature>
<feature type="helix" evidence="44">
    <location>
        <begin position="87"/>
        <end position="94"/>
    </location>
</feature>
<feature type="helix" evidence="44">
    <location>
        <begin position="95"/>
        <end position="97"/>
    </location>
</feature>
<feature type="strand" evidence="44">
    <location>
        <begin position="100"/>
        <end position="106"/>
    </location>
</feature>
<feature type="turn" evidence="44">
    <location>
        <begin position="107"/>
        <end position="110"/>
    </location>
</feature>
<feature type="strand" evidence="44">
    <location>
        <begin position="111"/>
        <end position="118"/>
    </location>
</feature>
<feature type="helix" evidence="44">
    <location>
        <begin position="119"/>
        <end position="129"/>
    </location>
</feature>
<feature type="strand" evidence="44">
    <location>
        <begin position="140"/>
        <end position="143"/>
    </location>
</feature>
<feature type="strand" evidence="44">
    <location>
        <begin position="149"/>
        <end position="154"/>
    </location>
</feature>
<feature type="helix" evidence="44">
    <location>
        <begin position="161"/>
        <end position="168"/>
    </location>
</feature>
<feature type="helix" evidence="46">
    <location>
        <begin position="169"/>
        <end position="171"/>
    </location>
</feature>
<feature type="strand" evidence="44">
    <location>
        <begin position="174"/>
        <end position="182"/>
    </location>
</feature>
<feature type="strand" evidence="44">
    <location>
        <begin position="187"/>
        <end position="197"/>
    </location>
</feature>
<feature type="helix" evidence="44">
    <location>
        <begin position="198"/>
        <end position="210"/>
    </location>
</feature>
<feature type="strand" evidence="44">
    <location>
        <begin position="213"/>
        <end position="218"/>
    </location>
</feature>
<feature type="strand" evidence="44">
    <location>
        <begin position="223"/>
        <end position="226"/>
    </location>
</feature>
<feature type="strand" evidence="46">
    <location>
        <begin position="231"/>
        <end position="234"/>
    </location>
</feature>
<feature type="helix" evidence="47">
    <location>
        <begin position="238"/>
        <end position="240"/>
    </location>
</feature>
<feature type="helix" evidence="47">
    <location>
        <begin position="245"/>
        <end position="250"/>
    </location>
</feature>
<feature type="strand" evidence="44">
    <location>
        <begin position="255"/>
        <end position="257"/>
    </location>
</feature>
<feature type="helix" evidence="47">
    <location>
        <begin position="263"/>
        <end position="281"/>
    </location>
</feature>
<feature type="helix" evidence="45">
    <location>
        <begin position="308"/>
        <end position="311"/>
    </location>
</feature>
<gene>
    <name evidence="25 27" type="primary">NONO</name>
    <name evidence="23" type="synonym">NRB54</name>
</gene>
<organism>
    <name type="scientific">Homo sapiens</name>
    <name type="common">Human</name>
    <dbReference type="NCBI Taxonomy" id="9606"/>
    <lineage>
        <taxon>Eukaryota</taxon>
        <taxon>Metazoa</taxon>
        <taxon>Chordata</taxon>
        <taxon>Craniata</taxon>
        <taxon>Vertebrata</taxon>
        <taxon>Euteleostomi</taxon>
        <taxon>Mammalia</taxon>
        <taxon>Eutheria</taxon>
        <taxon>Euarchontoglires</taxon>
        <taxon>Primates</taxon>
        <taxon>Haplorrhini</taxon>
        <taxon>Catarrhini</taxon>
        <taxon>Hominidae</taxon>
        <taxon>Homo</taxon>
    </lineage>
</organism>
<keyword id="KW-0002">3D-structure</keyword>
<keyword id="KW-0007">Acetylation</keyword>
<keyword id="KW-0010">Activator</keyword>
<keyword id="KW-0025">Alternative splicing</keyword>
<keyword id="KW-0090">Biological rhythms</keyword>
<keyword id="KW-0160">Chromosomal rearrangement</keyword>
<keyword id="KW-0158">Chromosome</keyword>
<keyword id="KW-0175">Coiled coil</keyword>
<keyword id="KW-0903">Direct protein sequencing</keyword>
<keyword id="KW-0227">DNA damage</keyword>
<keyword id="KW-0233">DNA recombination</keyword>
<keyword id="KW-0234">DNA repair</keyword>
<keyword id="KW-0238">DNA-binding</keyword>
<keyword id="KW-0391">Immunity</keyword>
<keyword id="KW-0399">Innate immunity</keyword>
<keyword id="KW-0991">Intellectual disability</keyword>
<keyword id="KW-1017">Isopeptide bond</keyword>
<keyword id="KW-0488">Methylation</keyword>
<keyword id="KW-0507">mRNA processing</keyword>
<keyword id="KW-0508">mRNA splicing</keyword>
<keyword id="KW-0539">Nucleus</keyword>
<keyword id="KW-0597">Phosphoprotein</keyword>
<keyword id="KW-1267">Proteomics identification</keyword>
<keyword id="KW-1185">Reference proteome</keyword>
<keyword id="KW-0677">Repeat</keyword>
<keyword id="KW-0678">Repressor</keyword>
<keyword id="KW-0694">RNA-binding</keyword>
<keyword id="KW-0804">Transcription</keyword>
<keyword id="KW-0805">Transcription regulation</keyword>
<keyword id="KW-0832">Ubl conjugation</keyword>
<proteinExistence type="evidence at protein level"/>
<name>NONO_HUMAN</name>
<protein>
    <recommendedName>
        <fullName evidence="25">Non-POU domain-containing octamer-binding protein</fullName>
        <shortName evidence="25">NonO protein</shortName>
    </recommendedName>
    <alternativeName>
        <fullName evidence="23">54 kDa nuclear RNA- and DNA-binding protein</fullName>
        <shortName evidence="23">p54(nrb)</shortName>
        <shortName evidence="23">p54nrb</shortName>
    </alternativeName>
    <alternativeName>
        <fullName evidence="24">55 kDa nuclear protein</fullName>
        <shortName evidence="24">NMT55</shortName>
    </alternativeName>
    <alternativeName>
        <fullName evidence="22">DNA-binding p52/p100 complex, 52 kDa subunit</fullName>
    </alternativeName>
</protein>
<reference key="1">
    <citation type="journal article" date="1993" name="Nucleic Acids Res.">
        <title>Purification and cDNA cloning of HeLa cell p54nrb, a nuclear protein with two RNA recognition motifs and extensive homology to human splicing factor PSF and Drosophila NONA/BJ6.</title>
        <authorList>
            <person name="Dong B."/>
            <person name="Horowitz D.S."/>
            <person name="Kobayashi R."/>
            <person name="Krainer A.R."/>
        </authorList>
    </citation>
    <scope>NUCLEOTIDE SEQUENCE [MRNA] (ISOFORM 1)</scope>
    <scope>PROTEIN SEQUENCE OF 252-267; 273-279 AND 283-289</scope>
</reference>
<reference key="2">
    <citation type="journal article" date="1997" name="Diagn. Mol. Pathol.">
        <title>Loss of expression of a 55 kDa nuclear protein (nmt55) in estrogen receptor-negative human breast cancer.</title>
        <authorList>
            <person name="Traish A.M."/>
            <person name="Huang Y.-H."/>
            <person name="Ashba J."/>
            <person name="Pronovost M."/>
            <person name="Pavao M."/>
            <person name="McAneny D.B."/>
            <person name="Moreland R.B."/>
        </authorList>
    </citation>
    <scope>NUCLEOTIDE SEQUENCE [MRNA] (ISOFORM 1)</scope>
    <source>
        <tissue>Mammary carcinoma</tissue>
    </source>
</reference>
<reference key="3">
    <citation type="journal article" date="1997" name="Hum. Genet.">
        <title>AFX1 and p54nrb: fine mapping, genomic structure, and exclusion as candidate genes of X-linked dystonia parkinsonism.</title>
        <authorList>
            <person name="Peters U."/>
            <person name="Haberhausen G."/>
            <person name="Kostrzewa M."/>
            <person name="Nolte D."/>
            <person name="Mueller U."/>
        </authorList>
    </citation>
    <scope>NUCLEOTIDE SEQUENCE [GENOMIC DNA]</scope>
    <scope>TISSUE SPECIFICITY</scope>
    <source>
        <tissue>Blood</tissue>
    </source>
</reference>
<reference key="4">
    <citation type="submission" date="1994-01" db="EMBL/GenBank/DDBJ databases">
        <title>54 kDa human protein.</title>
        <authorList>
            <person name="Honore B."/>
            <person name="Rasmussen H.H."/>
            <person name="Celis J.E."/>
        </authorList>
    </citation>
    <scope>NUCLEOTIDE SEQUENCE [MRNA] (ISOFORM 1)</scope>
</reference>
<reference key="5">
    <citation type="journal article" date="2004" name="Nat. Genet.">
        <title>Complete sequencing and characterization of 21,243 full-length human cDNAs.</title>
        <authorList>
            <person name="Ota T."/>
            <person name="Suzuki Y."/>
            <person name="Nishikawa T."/>
            <person name="Otsuki T."/>
            <person name="Sugiyama T."/>
            <person name="Irie R."/>
            <person name="Wakamatsu A."/>
            <person name="Hayashi K."/>
            <person name="Sato H."/>
            <person name="Nagai K."/>
            <person name="Kimura K."/>
            <person name="Makita H."/>
            <person name="Sekine M."/>
            <person name="Obayashi M."/>
            <person name="Nishi T."/>
            <person name="Shibahara T."/>
            <person name="Tanaka T."/>
            <person name="Ishii S."/>
            <person name="Yamamoto J."/>
            <person name="Saito K."/>
            <person name="Kawai Y."/>
            <person name="Isono Y."/>
            <person name="Nakamura Y."/>
            <person name="Nagahari K."/>
            <person name="Murakami K."/>
            <person name="Yasuda T."/>
            <person name="Iwayanagi T."/>
            <person name="Wagatsuma M."/>
            <person name="Shiratori A."/>
            <person name="Sudo H."/>
            <person name="Hosoiri T."/>
            <person name="Kaku Y."/>
            <person name="Kodaira H."/>
            <person name="Kondo H."/>
            <person name="Sugawara M."/>
            <person name="Takahashi M."/>
            <person name="Kanda K."/>
            <person name="Yokoi T."/>
            <person name="Furuya T."/>
            <person name="Kikkawa E."/>
            <person name="Omura Y."/>
            <person name="Abe K."/>
            <person name="Kamihara K."/>
            <person name="Katsuta N."/>
            <person name="Sato K."/>
            <person name="Tanikawa M."/>
            <person name="Yamazaki M."/>
            <person name="Ninomiya K."/>
            <person name="Ishibashi T."/>
            <person name="Yamashita H."/>
            <person name="Murakawa K."/>
            <person name="Fujimori K."/>
            <person name="Tanai H."/>
            <person name="Kimata M."/>
            <person name="Watanabe M."/>
            <person name="Hiraoka S."/>
            <person name="Chiba Y."/>
            <person name="Ishida S."/>
            <person name="Ono Y."/>
            <person name="Takiguchi S."/>
            <person name="Watanabe S."/>
            <person name="Yosida M."/>
            <person name="Hotuta T."/>
            <person name="Kusano J."/>
            <person name="Kanehori K."/>
            <person name="Takahashi-Fujii A."/>
            <person name="Hara H."/>
            <person name="Tanase T.-O."/>
            <person name="Nomura Y."/>
            <person name="Togiya S."/>
            <person name="Komai F."/>
            <person name="Hara R."/>
            <person name="Takeuchi K."/>
            <person name="Arita M."/>
            <person name="Imose N."/>
            <person name="Musashino K."/>
            <person name="Yuuki H."/>
            <person name="Oshima A."/>
            <person name="Sasaki N."/>
            <person name="Aotsuka S."/>
            <person name="Yoshikawa Y."/>
            <person name="Matsunawa H."/>
            <person name="Ichihara T."/>
            <person name="Shiohata N."/>
            <person name="Sano S."/>
            <person name="Moriya S."/>
            <person name="Momiyama H."/>
            <person name="Satoh N."/>
            <person name="Takami S."/>
            <person name="Terashima Y."/>
            <person name="Suzuki O."/>
            <person name="Nakagawa S."/>
            <person name="Senoh A."/>
            <person name="Mizoguchi H."/>
            <person name="Goto Y."/>
            <person name="Shimizu F."/>
            <person name="Wakebe H."/>
            <person name="Hishigaki H."/>
            <person name="Watanabe T."/>
            <person name="Sugiyama A."/>
            <person name="Takemoto M."/>
            <person name="Kawakami B."/>
            <person name="Yamazaki M."/>
            <person name="Watanabe K."/>
            <person name="Kumagai A."/>
            <person name="Itakura S."/>
            <person name="Fukuzumi Y."/>
            <person name="Fujimori Y."/>
            <person name="Komiyama M."/>
            <person name="Tashiro H."/>
            <person name="Tanigami A."/>
            <person name="Fujiwara T."/>
            <person name="Ono T."/>
            <person name="Yamada K."/>
            <person name="Fujii Y."/>
            <person name="Ozaki K."/>
            <person name="Hirao M."/>
            <person name="Ohmori Y."/>
            <person name="Kawabata A."/>
            <person name="Hikiji T."/>
            <person name="Kobatake N."/>
            <person name="Inagaki H."/>
            <person name="Ikema Y."/>
            <person name="Okamoto S."/>
            <person name="Okitani R."/>
            <person name="Kawakami T."/>
            <person name="Noguchi S."/>
            <person name="Itoh T."/>
            <person name="Shigeta K."/>
            <person name="Senba T."/>
            <person name="Matsumura K."/>
            <person name="Nakajima Y."/>
            <person name="Mizuno T."/>
            <person name="Morinaga M."/>
            <person name="Sasaki M."/>
            <person name="Togashi T."/>
            <person name="Oyama M."/>
            <person name="Hata H."/>
            <person name="Watanabe M."/>
            <person name="Komatsu T."/>
            <person name="Mizushima-Sugano J."/>
            <person name="Satoh T."/>
            <person name="Shirai Y."/>
            <person name="Takahashi Y."/>
            <person name="Nakagawa K."/>
            <person name="Okumura K."/>
            <person name="Nagase T."/>
            <person name="Nomura N."/>
            <person name="Kikuchi H."/>
            <person name="Masuho Y."/>
            <person name="Yamashita R."/>
            <person name="Nakai K."/>
            <person name="Yada T."/>
            <person name="Nakamura Y."/>
            <person name="Ohara O."/>
            <person name="Isogai T."/>
            <person name="Sugano S."/>
        </authorList>
    </citation>
    <scope>NUCLEOTIDE SEQUENCE [LARGE SCALE MRNA]</scope>
</reference>
<reference key="6">
    <citation type="journal article" date="2005" name="Nature">
        <title>The DNA sequence of the human X chromosome.</title>
        <authorList>
            <person name="Ross M.T."/>
            <person name="Grafham D.V."/>
            <person name="Coffey A.J."/>
            <person name="Scherer S."/>
            <person name="McLay K."/>
            <person name="Muzny D."/>
            <person name="Platzer M."/>
            <person name="Howell G.R."/>
            <person name="Burrows C."/>
            <person name="Bird C.P."/>
            <person name="Frankish A."/>
            <person name="Lovell F.L."/>
            <person name="Howe K.L."/>
            <person name="Ashurst J.L."/>
            <person name="Fulton R.S."/>
            <person name="Sudbrak R."/>
            <person name="Wen G."/>
            <person name="Jones M.C."/>
            <person name="Hurles M.E."/>
            <person name="Andrews T.D."/>
            <person name="Scott C.E."/>
            <person name="Searle S."/>
            <person name="Ramser J."/>
            <person name="Whittaker A."/>
            <person name="Deadman R."/>
            <person name="Carter N.P."/>
            <person name="Hunt S.E."/>
            <person name="Chen R."/>
            <person name="Cree A."/>
            <person name="Gunaratne P."/>
            <person name="Havlak P."/>
            <person name="Hodgson A."/>
            <person name="Metzker M.L."/>
            <person name="Richards S."/>
            <person name="Scott G."/>
            <person name="Steffen D."/>
            <person name="Sodergren E."/>
            <person name="Wheeler D.A."/>
            <person name="Worley K.C."/>
            <person name="Ainscough R."/>
            <person name="Ambrose K.D."/>
            <person name="Ansari-Lari M.A."/>
            <person name="Aradhya S."/>
            <person name="Ashwell R.I."/>
            <person name="Babbage A.K."/>
            <person name="Bagguley C.L."/>
            <person name="Ballabio A."/>
            <person name="Banerjee R."/>
            <person name="Barker G.E."/>
            <person name="Barlow K.F."/>
            <person name="Barrett I.P."/>
            <person name="Bates K.N."/>
            <person name="Beare D.M."/>
            <person name="Beasley H."/>
            <person name="Beasley O."/>
            <person name="Beck A."/>
            <person name="Bethel G."/>
            <person name="Blechschmidt K."/>
            <person name="Brady N."/>
            <person name="Bray-Allen S."/>
            <person name="Bridgeman A.M."/>
            <person name="Brown A.J."/>
            <person name="Brown M.J."/>
            <person name="Bonnin D."/>
            <person name="Bruford E.A."/>
            <person name="Buhay C."/>
            <person name="Burch P."/>
            <person name="Burford D."/>
            <person name="Burgess J."/>
            <person name="Burrill W."/>
            <person name="Burton J."/>
            <person name="Bye J.M."/>
            <person name="Carder C."/>
            <person name="Carrel L."/>
            <person name="Chako J."/>
            <person name="Chapman J.C."/>
            <person name="Chavez D."/>
            <person name="Chen E."/>
            <person name="Chen G."/>
            <person name="Chen Y."/>
            <person name="Chen Z."/>
            <person name="Chinault C."/>
            <person name="Ciccodicola A."/>
            <person name="Clark S.Y."/>
            <person name="Clarke G."/>
            <person name="Clee C.M."/>
            <person name="Clegg S."/>
            <person name="Clerc-Blankenburg K."/>
            <person name="Clifford K."/>
            <person name="Cobley V."/>
            <person name="Cole C.G."/>
            <person name="Conquer J.S."/>
            <person name="Corby N."/>
            <person name="Connor R.E."/>
            <person name="David R."/>
            <person name="Davies J."/>
            <person name="Davis C."/>
            <person name="Davis J."/>
            <person name="Delgado O."/>
            <person name="Deshazo D."/>
            <person name="Dhami P."/>
            <person name="Ding Y."/>
            <person name="Dinh H."/>
            <person name="Dodsworth S."/>
            <person name="Draper H."/>
            <person name="Dugan-Rocha S."/>
            <person name="Dunham A."/>
            <person name="Dunn M."/>
            <person name="Durbin K.J."/>
            <person name="Dutta I."/>
            <person name="Eades T."/>
            <person name="Ellwood M."/>
            <person name="Emery-Cohen A."/>
            <person name="Errington H."/>
            <person name="Evans K.L."/>
            <person name="Faulkner L."/>
            <person name="Francis F."/>
            <person name="Frankland J."/>
            <person name="Fraser A.E."/>
            <person name="Galgoczy P."/>
            <person name="Gilbert J."/>
            <person name="Gill R."/>
            <person name="Gloeckner G."/>
            <person name="Gregory S.G."/>
            <person name="Gribble S."/>
            <person name="Griffiths C."/>
            <person name="Grocock R."/>
            <person name="Gu Y."/>
            <person name="Gwilliam R."/>
            <person name="Hamilton C."/>
            <person name="Hart E.A."/>
            <person name="Hawes A."/>
            <person name="Heath P.D."/>
            <person name="Heitmann K."/>
            <person name="Hennig S."/>
            <person name="Hernandez J."/>
            <person name="Hinzmann B."/>
            <person name="Ho S."/>
            <person name="Hoffs M."/>
            <person name="Howden P.J."/>
            <person name="Huckle E.J."/>
            <person name="Hume J."/>
            <person name="Hunt P.J."/>
            <person name="Hunt A.R."/>
            <person name="Isherwood J."/>
            <person name="Jacob L."/>
            <person name="Johnson D."/>
            <person name="Jones S."/>
            <person name="de Jong P.J."/>
            <person name="Joseph S.S."/>
            <person name="Keenan S."/>
            <person name="Kelly S."/>
            <person name="Kershaw J.K."/>
            <person name="Khan Z."/>
            <person name="Kioschis P."/>
            <person name="Klages S."/>
            <person name="Knights A.J."/>
            <person name="Kosiura A."/>
            <person name="Kovar-Smith C."/>
            <person name="Laird G.K."/>
            <person name="Langford C."/>
            <person name="Lawlor S."/>
            <person name="Leversha M."/>
            <person name="Lewis L."/>
            <person name="Liu W."/>
            <person name="Lloyd C."/>
            <person name="Lloyd D.M."/>
            <person name="Loulseged H."/>
            <person name="Loveland J.E."/>
            <person name="Lovell J.D."/>
            <person name="Lozado R."/>
            <person name="Lu J."/>
            <person name="Lyne R."/>
            <person name="Ma J."/>
            <person name="Maheshwari M."/>
            <person name="Matthews L.H."/>
            <person name="McDowall J."/>
            <person name="McLaren S."/>
            <person name="McMurray A."/>
            <person name="Meidl P."/>
            <person name="Meitinger T."/>
            <person name="Milne S."/>
            <person name="Miner G."/>
            <person name="Mistry S.L."/>
            <person name="Morgan M."/>
            <person name="Morris S."/>
            <person name="Mueller I."/>
            <person name="Mullikin J.C."/>
            <person name="Nguyen N."/>
            <person name="Nordsiek G."/>
            <person name="Nyakatura G."/>
            <person name="O'dell C.N."/>
            <person name="Okwuonu G."/>
            <person name="Palmer S."/>
            <person name="Pandian R."/>
            <person name="Parker D."/>
            <person name="Parrish J."/>
            <person name="Pasternak S."/>
            <person name="Patel D."/>
            <person name="Pearce A.V."/>
            <person name="Pearson D.M."/>
            <person name="Pelan S.E."/>
            <person name="Perez L."/>
            <person name="Porter K.M."/>
            <person name="Ramsey Y."/>
            <person name="Reichwald K."/>
            <person name="Rhodes S."/>
            <person name="Ridler K.A."/>
            <person name="Schlessinger D."/>
            <person name="Schueler M.G."/>
            <person name="Sehra H.K."/>
            <person name="Shaw-Smith C."/>
            <person name="Shen H."/>
            <person name="Sheridan E.M."/>
            <person name="Shownkeen R."/>
            <person name="Skuce C.D."/>
            <person name="Smith M.L."/>
            <person name="Sotheran E.C."/>
            <person name="Steingruber H.E."/>
            <person name="Steward C.A."/>
            <person name="Storey R."/>
            <person name="Swann R.M."/>
            <person name="Swarbreck D."/>
            <person name="Tabor P.E."/>
            <person name="Taudien S."/>
            <person name="Taylor T."/>
            <person name="Teague B."/>
            <person name="Thomas K."/>
            <person name="Thorpe A."/>
            <person name="Timms K."/>
            <person name="Tracey A."/>
            <person name="Trevanion S."/>
            <person name="Tromans A.C."/>
            <person name="d'Urso M."/>
            <person name="Verduzco D."/>
            <person name="Villasana D."/>
            <person name="Waldron L."/>
            <person name="Wall M."/>
            <person name="Wang Q."/>
            <person name="Warren J."/>
            <person name="Warry G.L."/>
            <person name="Wei X."/>
            <person name="West A."/>
            <person name="Whitehead S.L."/>
            <person name="Whiteley M.N."/>
            <person name="Wilkinson J.E."/>
            <person name="Willey D.L."/>
            <person name="Williams G."/>
            <person name="Williams L."/>
            <person name="Williamson A."/>
            <person name="Williamson H."/>
            <person name="Wilming L."/>
            <person name="Woodmansey R.L."/>
            <person name="Wray P.W."/>
            <person name="Yen J."/>
            <person name="Zhang J."/>
            <person name="Zhou J."/>
            <person name="Zoghbi H."/>
            <person name="Zorilla S."/>
            <person name="Buck D."/>
            <person name="Reinhardt R."/>
            <person name="Poustka A."/>
            <person name="Rosenthal A."/>
            <person name="Lehrach H."/>
            <person name="Meindl A."/>
            <person name="Minx P.J."/>
            <person name="Hillier L.W."/>
            <person name="Willard H.F."/>
            <person name="Wilson R.K."/>
            <person name="Waterston R.H."/>
            <person name="Rice C.M."/>
            <person name="Vaudin M."/>
            <person name="Coulson A."/>
            <person name="Nelson D.L."/>
            <person name="Weinstock G."/>
            <person name="Sulston J.E."/>
            <person name="Durbin R.M."/>
            <person name="Hubbard T."/>
            <person name="Gibbs R.A."/>
            <person name="Beck S."/>
            <person name="Rogers J."/>
            <person name="Bentley D.R."/>
        </authorList>
    </citation>
    <scope>NUCLEOTIDE SEQUENCE [LARGE SCALE GENOMIC DNA]</scope>
</reference>
<reference key="7">
    <citation type="submission" date="2004-06" db="EMBL/GenBank/DDBJ databases">
        <title>Cloning of human full open reading frames in Gateway(TM) system entry vector (pDONR201).</title>
        <authorList>
            <person name="Ebert L."/>
            <person name="Schick M."/>
            <person name="Neubert P."/>
            <person name="Schatten R."/>
            <person name="Henze S."/>
            <person name="Korn B."/>
        </authorList>
    </citation>
    <scope>NUCLEOTIDE SEQUENCE [LARGE SCALE MRNA] (ISOFORM 1)</scope>
</reference>
<reference key="8">
    <citation type="submission" date="2005-09" db="EMBL/GenBank/DDBJ databases">
        <authorList>
            <person name="Mural R.J."/>
            <person name="Istrail S."/>
            <person name="Sutton G.G."/>
            <person name="Florea L."/>
            <person name="Halpern A.L."/>
            <person name="Mobarry C.M."/>
            <person name="Lippert R."/>
            <person name="Walenz B."/>
            <person name="Shatkay H."/>
            <person name="Dew I."/>
            <person name="Miller J.R."/>
            <person name="Flanigan M.J."/>
            <person name="Edwards N.J."/>
            <person name="Bolanos R."/>
            <person name="Fasulo D."/>
            <person name="Halldorsson B.V."/>
            <person name="Hannenhalli S."/>
            <person name="Turner R."/>
            <person name="Yooseph S."/>
            <person name="Lu F."/>
            <person name="Nusskern D.R."/>
            <person name="Shue B.C."/>
            <person name="Zheng X.H."/>
            <person name="Zhong F."/>
            <person name="Delcher A.L."/>
            <person name="Huson D.H."/>
            <person name="Kravitz S.A."/>
            <person name="Mouchard L."/>
            <person name="Reinert K."/>
            <person name="Remington K.A."/>
            <person name="Clark A.G."/>
            <person name="Waterman M.S."/>
            <person name="Eichler E.E."/>
            <person name="Adams M.D."/>
            <person name="Hunkapiller M.W."/>
            <person name="Myers E.W."/>
            <person name="Venter J.C."/>
        </authorList>
    </citation>
    <scope>NUCLEOTIDE SEQUENCE [LARGE SCALE GENOMIC DNA]</scope>
</reference>
<reference key="9">
    <citation type="journal article" date="2004" name="Genome Res.">
        <title>The status, quality, and expansion of the NIH full-length cDNA project: the Mammalian Gene Collection (MGC).</title>
        <authorList>
            <consortium name="The MGC Project Team"/>
        </authorList>
    </citation>
    <scope>NUCLEOTIDE SEQUENCE [LARGE SCALE MRNA] (ISOFORM 1)</scope>
    <source>
        <tissue>Cervix</tissue>
        <tissue>Kidney</tissue>
        <tissue>Muscle</tissue>
        <tissue>Skin</tissue>
    </source>
</reference>
<reference key="10">
    <citation type="journal article" date="1993" name="Biochem. J.">
        <title>Purification and characterization of a DNA-binding heterodimer of 52 and 100 kDa from HeLa cells.</title>
        <authorList>
            <person name="Zhang W.-W."/>
            <person name="Zhang L.-X."/>
            <person name="Busch R.K."/>
            <person name="Farres J."/>
            <person name="Busch H."/>
        </authorList>
    </citation>
    <scope>PROTEIN SEQUENCE OF 2-21 AND 133-153</scope>
    <scope>BLOCKAGE OF N-TERMINUS</scope>
    <scope>SUBUNIT</scope>
</reference>
<reference key="11">
    <citation type="submission" date="2008-12" db="UniProtKB">
        <authorList>
            <person name="Lubec G."/>
            <person name="Chen W.-Q."/>
            <person name="Sun Y."/>
        </authorList>
    </citation>
    <scope>PROTEIN SEQUENCE OF 76-91; 127-135; 177-184; 257-270 AND 435-456</scope>
    <scope>IDENTIFICATION BY MASS SPECTROMETRY</scope>
    <source>
        <tissue>Fetal brain cortex</tissue>
    </source>
</reference>
<reference key="12">
    <citation type="journal article" date="1997" name="Oncogene">
        <title>Fusion of splicing factor genes PSF and NonO (p54nrb) to the TFE3 gene in papillary renal cell carcinoma.</title>
        <authorList>
            <person name="Clark J."/>
            <person name="Lu Y.-J."/>
            <person name="Sidhar S.K."/>
            <person name="Parker C."/>
            <person name="Gill S."/>
            <person name="Smedley D."/>
            <person name="Hamoudi R."/>
            <person name="Linehan W.M."/>
            <person name="Shipley J."/>
            <person name="Cooper C.S."/>
        </authorList>
    </citation>
    <scope>CHROMOSOMAL TRANSLOCATION WITH TFE3</scope>
</reference>
<reference key="13">
    <citation type="journal article" date="1998" name="J. Biol. Chem.">
        <title>The RNA-splicing factor PSF/p54 controls DNA-topoisomerase I activity by a direct interaction.</title>
        <authorList>
            <person name="Straub T."/>
            <person name="Grue P."/>
            <person name="Uhse A."/>
            <person name="Lisby M."/>
            <person name="Knudsen B.R."/>
            <person name="Tange T.O."/>
            <person name="Westergaard O."/>
            <person name="Boege F."/>
        </authorList>
    </citation>
    <scope>IDENTIFICATION IN A COMPLEX WITH SFPQ AND TOP1</scope>
</reference>
<reference key="14">
    <citation type="journal article" date="2000" name="Biochemistry">
        <title>PSF/p54(nrb) stimulates 'jumping' of DNA topoisomerase I between separate DNA helices.</title>
        <authorList>
            <person name="Straub T."/>
            <person name="Knudsen B.R."/>
            <person name="Boege F."/>
        </authorList>
    </citation>
    <scope>FUNCTION IN DNA UNWINDING</scope>
</reference>
<reference key="15">
    <citation type="journal article" date="2001" name="Cell">
        <title>The fate of dsRNA in the nucleus: a p54(nrb)-containing complex mediates the nuclear retention of promiscuously A-to-I edited RNAs.</title>
        <authorList>
            <person name="Zhang Z."/>
            <person name="Carmichael G.G."/>
        </authorList>
    </citation>
    <scope>FUNCTION IN NUCLEAR RETENTION OF A-TO-I EDITED RNAS</scope>
    <scope>IDENTIFICATION IN A COMPLEX WITH NONO AND MATR3</scope>
</reference>
<reference key="16">
    <citation type="journal article" date="2002" name="Endocrinology">
        <title>Transcriptional activation of human CYP17 in H295R adrenocortical cells depends on complex formation among p54(nrb)/NonO, protein-associated splicing factor, and SF-1, a complex that also participates in repression of transcription.</title>
        <authorList>
            <person name="Sewer M.B."/>
            <person name="Nguyen V.Q."/>
            <person name="Huang C.J."/>
            <person name="Tucker P.W."/>
            <person name="Kagawa N."/>
            <person name="Waterman M.R."/>
        </authorList>
    </citation>
    <scope>IDENTIFICATION BY MASS SPECTROMETRY</scope>
    <scope>FUNCTION IN TRANSCRIPTION REGULATION</scope>
    <scope>IDENTIFICATION IN A COMPLEX WITH SFPQ AND NR5A1</scope>
</reference>
<reference key="17">
    <citation type="journal article" date="2002" name="RNA">
        <title>PSF and p54nrb bind a conserved stem in U5 snRNA.</title>
        <authorList>
            <person name="Peng R."/>
            <person name="Dye B.T."/>
            <person name="Perez I."/>
            <person name="Barnard D.C."/>
            <person name="Thompson A.B."/>
            <person name="Patton J.G."/>
        </authorList>
    </citation>
    <scope>FUNCTION</scope>
    <scope>INTERACTION WITH PSQF AND U5 SNRNA</scope>
    <scope>IDENTIFICATION IN U5/4/6 SNRNP AND SPLICEOSOME COMPLEXES</scope>
</reference>
<reference key="18">
    <citation type="journal article" date="2005" name="J. Biol. Chem.">
        <title>Identification of the polypyrimidine tract binding protein-associated splicing factor.p54(nrb) complex as a candidate DNA double-strand break rejoining factor.</title>
        <authorList>
            <person name="Bladen C.L."/>
            <person name="Udayakumar D."/>
            <person name="Takeda Y."/>
            <person name="Dynan W.S."/>
        </authorList>
    </citation>
    <scope>FUNCTION IN DNA REPAIR</scope>
    <scope>IDENTIFICATION BY MASS SPECTROMETRY</scope>
    <scope>DNA-BINDING</scope>
    <scope>SUBUNIT</scope>
</reference>
<reference key="19">
    <citation type="journal article" date="2005" name="Mol. Biol. Cell">
        <title>P54nrb forms a heterodimer with PSP1 that localizes to paraspeckles in an RNA-dependent manner.</title>
        <authorList>
            <person name="Fox A.H."/>
            <person name="Bond C.S."/>
            <person name="Lamond A.I."/>
        </authorList>
    </citation>
    <scope>INTERACTION WITH PSPC1</scope>
</reference>
<reference key="20">
    <citation type="journal article" date="2006" name="Cell">
        <title>Global, in vivo, and site-specific phosphorylation dynamics in signaling networks.</title>
        <authorList>
            <person name="Olsen J.V."/>
            <person name="Blagoev B."/>
            <person name="Gnad F."/>
            <person name="Macek B."/>
            <person name="Kumar C."/>
            <person name="Mortensen P."/>
            <person name="Mann M."/>
        </authorList>
    </citation>
    <scope>PHOSPHORYLATION [LARGE SCALE ANALYSIS] AT THR-450</scope>
    <scope>IDENTIFICATION BY MASS SPECTROMETRY [LARGE SCALE ANALYSIS]</scope>
    <source>
        <tissue>Cervix carcinoma</tissue>
    </source>
</reference>
<reference key="21">
    <citation type="journal article" date="2006" name="Nat. Biotechnol.">
        <title>A probability-based approach for high-throughput protein phosphorylation analysis and site localization.</title>
        <authorList>
            <person name="Beausoleil S.A."/>
            <person name="Villen J."/>
            <person name="Gerber S.A."/>
            <person name="Rush J."/>
            <person name="Gygi S.P."/>
        </authorList>
    </citation>
    <scope>PHOSPHORYLATION [LARGE SCALE ANALYSIS] AT THR-450</scope>
    <scope>IDENTIFICATION BY MASS SPECTROMETRY [LARGE SCALE ANALYSIS]</scope>
    <source>
        <tissue>Cervix carcinoma</tissue>
    </source>
</reference>
<reference key="22">
    <citation type="journal article" date="2006" name="Nat. Cell Biol.">
        <title>Regulation of RNA-polymerase-II-dependent transcription by N-WASP and its nuclear-binding partners.</title>
        <authorList>
            <person name="Wu X."/>
            <person name="Yoo Y."/>
            <person name="Okuhama N.N."/>
            <person name="Tucker P.W."/>
            <person name="Liu G."/>
            <person name="Guan J.L."/>
        </authorList>
    </citation>
    <scope>IDENTIFICATION IN A COMPLEX WITH SFPQ AND WASL</scope>
    <scope>INTERACTION WITH WASL</scope>
</reference>
<reference key="23">
    <citation type="journal article" date="2007" name="J. Proteome Res.">
        <title>Improved titanium dioxide enrichment of phosphopeptides from HeLa cells and high confident phosphopeptide identification by cross-validation of MS/MS and MS/MS/MS spectra.</title>
        <authorList>
            <person name="Yu L.R."/>
            <person name="Zhu Z."/>
            <person name="Chan K.C."/>
            <person name="Issaq H.J."/>
            <person name="Dimitrov D.S."/>
            <person name="Veenstra T.D."/>
        </authorList>
    </citation>
    <scope>PHOSPHORYLATION [LARGE SCALE ANALYSIS] AT THR-428 AND THR-450</scope>
    <scope>IDENTIFICATION BY MASS SPECTROMETRY [LARGE SCALE ANALYSIS]</scope>
    <source>
        <tissue>Cervix carcinoma</tissue>
    </source>
</reference>
<reference key="24">
    <citation type="journal article" date="2007" name="Mol. Cell. Proteomics">
        <title>Quantitative phosphoproteome profiling of Wnt3a-mediated signaling network: indicating the involvement of ribonucleoside-diphosphate reductase M2 subunit phosphorylation at residue serine 20 in canonical Wnt signal transduction.</title>
        <authorList>
            <person name="Tang L.-Y."/>
            <person name="Deng N."/>
            <person name="Wang L.-S."/>
            <person name="Dai J."/>
            <person name="Wang Z.-L."/>
            <person name="Jiang X.-S."/>
            <person name="Li S.-J."/>
            <person name="Li L."/>
            <person name="Sheng Q.-H."/>
            <person name="Wu D.-Q."/>
            <person name="Li L."/>
            <person name="Zeng R."/>
        </authorList>
    </citation>
    <scope>PHOSPHORYLATION [LARGE SCALE ANALYSIS] AT THR-450</scope>
    <scope>IDENTIFICATION BY MASS SPECTROMETRY [LARGE SCALE ANALYSIS]</scope>
    <source>
        <tissue>Embryonic kidney</tissue>
    </source>
</reference>
<reference key="25">
    <citation type="journal article" date="2008" name="J. Proteome Res.">
        <title>Combining protein-based IMAC, peptide-based IMAC, and MudPIT for efficient phosphoproteomic analysis.</title>
        <authorList>
            <person name="Cantin G.T."/>
            <person name="Yi W."/>
            <person name="Lu B."/>
            <person name="Park S.K."/>
            <person name="Xu T."/>
            <person name="Lee J.-D."/>
            <person name="Yates J.R. III"/>
        </authorList>
    </citation>
    <scope>PHOSPHORYLATION [LARGE SCALE ANALYSIS] AT THR-450</scope>
    <scope>IDENTIFICATION BY MASS SPECTROMETRY [LARGE SCALE ANALYSIS]</scope>
    <source>
        <tissue>Cervix carcinoma</tissue>
    </source>
</reference>
<reference key="26">
    <citation type="journal article" date="2008" name="Mol. Cell">
        <title>Kinase-selective enrichment enables quantitative phosphoproteomics of the kinome across the cell cycle.</title>
        <authorList>
            <person name="Daub H."/>
            <person name="Olsen J.V."/>
            <person name="Bairlein M."/>
            <person name="Gnad F."/>
            <person name="Oppermann F.S."/>
            <person name="Korner R."/>
            <person name="Greff Z."/>
            <person name="Keri G."/>
            <person name="Stemmann O."/>
            <person name="Mann M."/>
        </authorList>
    </citation>
    <scope>PHOSPHORYLATION [LARGE SCALE ANALYSIS] AT THR-428 AND THR-450</scope>
    <scope>IDENTIFICATION BY MASS SPECTROMETRY [LARGE SCALE ANALYSIS]</scope>
    <source>
        <tissue>Cervix carcinoma</tissue>
    </source>
</reference>
<reference key="27">
    <citation type="journal article" date="2008" name="Proc. Natl. Acad. Sci. U.S.A.">
        <title>A quantitative atlas of mitotic phosphorylation.</title>
        <authorList>
            <person name="Dephoure N."/>
            <person name="Zhou C."/>
            <person name="Villen J."/>
            <person name="Beausoleil S.A."/>
            <person name="Bakalarski C.E."/>
            <person name="Elledge S.J."/>
            <person name="Gygi S.P."/>
        </authorList>
    </citation>
    <scope>PHOSPHORYLATION [LARGE SCALE ANALYSIS] AT THR-450</scope>
    <scope>IDENTIFICATION BY MASS SPECTROMETRY [LARGE SCALE ANALYSIS]</scope>
    <source>
        <tissue>Cervix carcinoma</tissue>
    </source>
</reference>
<reference key="28">
    <citation type="journal article" date="2008" name="Proteomics">
        <title>Proteomic identification of a PSF/p54nrb heterodimer as RNF43 oncoprotein-interacting proteins.</title>
        <authorList>
            <person name="Miyamoto K."/>
            <person name="Sakurai H."/>
            <person name="Sugiura T."/>
        </authorList>
    </citation>
    <scope>INTERACTION WITH RNF43</scope>
</reference>
<reference key="29">
    <citation type="journal article" date="2009" name="Anal. Chem.">
        <title>Lys-N and trypsin cover complementary parts of the phosphoproteome in a refined SCX-based approach.</title>
        <authorList>
            <person name="Gauci S."/>
            <person name="Helbig A.O."/>
            <person name="Slijper M."/>
            <person name="Krijgsveld J."/>
            <person name="Heck A.J."/>
            <person name="Mohammed S."/>
        </authorList>
    </citation>
    <scope>IDENTIFICATION BY MASS SPECTROMETRY [LARGE SCALE ANALYSIS]</scope>
</reference>
<reference key="30">
    <citation type="journal article" date="2009" name="Sci. Signal.">
        <title>Quantitative phosphoproteomic analysis of T cell receptor signaling reveals system-wide modulation of protein-protein interactions.</title>
        <authorList>
            <person name="Mayya V."/>
            <person name="Lundgren D.H."/>
            <person name="Hwang S.-I."/>
            <person name="Rezaul K."/>
            <person name="Wu L."/>
            <person name="Eng J.K."/>
            <person name="Rodionov V."/>
            <person name="Han D.K."/>
        </authorList>
    </citation>
    <scope>PHOSPHORYLATION [LARGE SCALE ANALYSIS] AT THR-428 AND THR-450</scope>
    <scope>IDENTIFICATION BY MASS SPECTROMETRY [LARGE SCALE ANALYSIS]</scope>
    <source>
        <tissue>Leukemic T-cell</tissue>
    </source>
</reference>
<reference key="31">
    <citation type="journal article" date="2009" name="Science">
        <title>Lysine acetylation targets protein complexes and co-regulates major cellular functions.</title>
        <authorList>
            <person name="Choudhary C."/>
            <person name="Kumar C."/>
            <person name="Gnad F."/>
            <person name="Nielsen M.L."/>
            <person name="Rehman M."/>
            <person name="Walther T.C."/>
            <person name="Olsen J.V."/>
            <person name="Mann M."/>
        </authorList>
    </citation>
    <scope>ACETYLATION [LARGE SCALE ANALYSIS] AT LYS-5; LYS-11 AND LYS-198</scope>
    <scope>IDENTIFICATION BY MASS SPECTROMETRY [LARGE SCALE ANALYSIS]</scope>
</reference>
<reference key="32">
    <citation type="journal article" date="2010" name="Sci. Signal.">
        <title>Quantitative phosphoproteomics reveals widespread full phosphorylation site occupancy during mitosis.</title>
        <authorList>
            <person name="Olsen J.V."/>
            <person name="Vermeulen M."/>
            <person name="Santamaria A."/>
            <person name="Kumar C."/>
            <person name="Miller M.L."/>
            <person name="Jensen L.J."/>
            <person name="Gnad F."/>
            <person name="Cox J."/>
            <person name="Jensen T.S."/>
            <person name="Nigg E.A."/>
            <person name="Brunak S."/>
            <person name="Mann M."/>
        </authorList>
    </citation>
    <scope>PHOSPHORYLATION [LARGE SCALE ANALYSIS] AT SER-147; THR-440 AND THR-450</scope>
    <scope>IDENTIFICATION BY MASS SPECTROMETRY [LARGE SCALE ANALYSIS]</scope>
    <source>
        <tissue>Cervix carcinoma</tissue>
    </source>
</reference>
<reference key="33">
    <citation type="journal article" date="2011" name="BMC Syst. Biol.">
        <title>Initial characterization of the human central proteome.</title>
        <authorList>
            <person name="Burkard T.R."/>
            <person name="Planyavsky M."/>
            <person name="Kaupe I."/>
            <person name="Breitwieser F.P."/>
            <person name="Buerckstuemmer T."/>
            <person name="Bennett K.L."/>
            <person name="Superti-Furga G."/>
            <person name="Colinge J."/>
        </authorList>
    </citation>
    <scope>IDENTIFICATION BY MASS SPECTROMETRY [LARGE SCALE ANALYSIS]</scope>
</reference>
<reference key="34">
    <citation type="journal article" date="2011" name="Sci. Signal.">
        <title>System-wide temporal characterization of the proteome and phosphoproteome of human embryonic stem cell differentiation.</title>
        <authorList>
            <person name="Rigbolt K.T."/>
            <person name="Prokhorova T.A."/>
            <person name="Akimov V."/>
            <person name="Henningsen J."/>
            <person name="Johansen P.T."/>
            <person name="Kratchmarova I."/>
            <person name="Kassem M."/>
            <person name="Mann M."/>
            <person name="Olsen J.V."/>
            <person name="Blagoev B."/>
        </authorList>
    </citation>
    <scope>PHOSPHORYLATION [LARGE SCALE ANALYSIS] AT THR-450</scope>
    <scope>IDENTIFICATION BY MASS SPECTROMETRY [LARGE SCALE ANALYSIS]</scope>
</reference>
<reference key="35">
    <citation type="journal article" date="2012" name="Mol. Cell. Proteomics">
        <title>Systematic analysis of protein pools, isoforms, and modifications affecting turnover and subcellular localization.</title>
        <authorList>
            <person name="Ahmad Y."/>
            <person name="Boisvert F.M."/>
            <person name="Lundberg E."/>
            <person name="Uhlen M."/>
            <person name="Lamond A.I."/>
        </authorList>
    </citation>
    <scope>SUBCELLULAR LOCATION [LARGE SCALE ANALYSIS]</scope>
</reference>
<reference key="36">
    <citation type="journal article" date="2013" name="J. Proteome Res.">
        <title>Toward a comprehensive characterization of a human cancer cell phosphoproteome.</title>
        <authorList>
            <person name="Zhou H."/>
            <person name="Di Palma S."/>
            <person name="Preisinger C."/>
            <person name="Peng M."/>
            <person name="Polat A.N."/>
            <person name="Heck A.J."/>
            <person name="Mohammed S."/>
        </authorList>
    </citation>
    <scope>PHOSPHORYLATION [LARGE SCALE ANALYSIS] AT THR-6; SER-262 AND THR-450</scope>
    <scope>IDENTIFICATION BY MASS SPECTROMETRY [LARGE SCALE ANALYSIS]</scope>
    <source>
        <tissue>Cervix carcinoma</tissue>
        <tissue>Erythroleukemia</tissue>
    </source>
</reference>
<reference key="37">
    <citation type="journal article" date="2014" name="J. Proteomics">
        <title>An enzyme assisted RP-RPLC approach for in-depth analysis of human liver phosphoproteome.</title>
        <authorList>
            <person name="Bian Y."/>
            <person name="Song C."/>
            <person name="Cheng K."/>
            <person name="Dong M."/>
            <person name="Wang F."/>
            <person name="Huang J."/>
            <person name="Sun D."/>
            <person name="Wang L."/>
            <person name="Ye M."/>
            <person name="Zou H."/>
        </authorList>
    </citation>
    <scope>PHOSPHORYLATION [LARGE SCALE ANALYSIS] AT THR-450</scope>
    <scope>IDENTIFICATION BY MASS SPECTROMETRY [LARGE SCALE ANALYSIS]</scope>
    <source>
        <tissue>Liver</tissue>
    </source>
</reference>
<reference key="38">
    <citation type="journal article" date="2014" name="Mol. Cell. Proteomics">
        <title>Immunoaffinity enrichment and mass spectrometry analysis of protein methylation.</title>
        <authorList>
            <person name="Guo A."/>
            <person name="Gu H."/>
            <person name="Zhou J."/>
            <person name="Mulhern D."/>
            <person name="Wang Y."/>
            <person name="Lee K.A."/>
            <person name="Yang V."/>
            <person name="Aguiar M."/>
            <person name="Kornhauser J."/>
            <person name="Jia X."/>
            <person name="Ren J."/>
            <person name="Beausoleil S.A."/>
            <person name="Silva J.C."/>
            <person name="Vemulapalli V."/>
            <person name="Bedford M.T."/>
            <person name="Comb M.J."/>
        </authorList>
    </citation>
    <scope>METHYLATION [LARGE SCALE ANALYSIS] AT ARG-456</scope>
    <scope>IDENTIFICATION BY MASS SPECTROMETRY [LARGE SCALE ANALYSIS]</scope>
    <source>
        <tissue>Colon carcinoma</tissue>
    </source>
</reference>
<reference key="39">
    <citation type="journal article" date="2014" name="Nat. Struct. Mol. Biol.">
        <title>Uncovering global SUMOylation signaling networks in a site-specific manner.</title>
        <authorList>
            <person name="Hendriks I.A."/>
            <person name="D'Souza R.C."/>
            <person name="Yang B."/>
            <person name="Verlaan-de Vries M."/>
            <person name="Mann M."/>
            <person name="Vertegaal A.C."/>
        </authorList>
    </citation>
    <scope>SUMOYLATION [LARGE SCALE ANALYSIS] AT LYS-5 AND LYS-371</scope>
    <scope>IDENTIFICATION BY MASS SPECTROMETRY [LARGE SCALE ANALYSIS]</scope>
</reference>
<reference key="40">
    <citation type="journal article" date="2015" name="PLoS ONE">
        <title>Identification of Novel Proteins Co-Purifying with Cockayne Syndrome Group B (CSB) Reveals Potential Roles for CSB in RNA Metabolism and Chromatin Dynamics.</title>
        <authorList>
            <person name="Nicolai S."/>
            <person name="Filippi S."/>
            <person name="Caputo M."/>
            <person name="Cipak L."/>
            <person name="Gregan J."/>
            <person name="Ammerer G."/>
            <person name="Frontini M."/>
            <person name="Willems D."/>
            <person name="Prantera G."/>
            <person name="Balajee A.S."/>
            <person name="Proietti-De-Santis L."/>
        </authorList>
    </citation>
    <scope>INTERACTION WITH ERCC6</scope>
</reference>
<reference key="41">
    <citation type="journal article" date="2015" name="Proteomics">
        <title>N-terminome analysis of the human mitochondrial proteome.</title>
        <authorList>
            <person name="Vaca Jacome A.S."/>
            <person name="Rabilloud T."/>
            <person name="Schaeffer-Reiss C."/>
            <person name="Rompais M."/>
            <person name="Ayoub D."/>
            <person name="Lane L."/>
            <person name="Bairoch A."/>
            <person name="Van Dorsselaer A."/>
            <person name="Carapito C."/>
        </authorList>
    </citation>
    <scope>IDENTIFICATION BY MASS SPECTROMETRY [LARGE SCALE ANALYSIS]</scope>
</reference>
<reference key="42">
    <citation type="journal article" date="2017" name="Mol. Cell">
        <title>HEXIM1 and NEAT1 Long non-coding RNA form a multi-subunit complex that regulates DNA-mediated innate immune response.</title>
        <authorList>
            <person name="Morchikh M."/>
            <person name="Cribier A."/>
            <person name="Raffel R."/>
            <person name="Amraoui S."/>
            <person name="Cau J."/>
            <person name="Severac D."/>
            <person name="Dubois E."/>
            <person name="Schwartz O."/>
            <person name="Bennasser Y."/>
            <person name="Benkirane M."/>
        </authorList>
    </citation>
    <scope>FUNCTION</scope>
    <scope>SUBCELLULAR LOCATION</scope>
    <scope>INTERACTION WITH PRKDC; XRCC5; XRCC6; SFPQ; HEXIM1; PSPC1; RBM14 AND MATR3</scope>
</reference>
<reference key="43">
    <citation type="journal article" date="2017" name="Nat. Struct. Mol. Biol.">
        <title>Site-specific mapping of the human SUMO proteome reveals co-modification with phosphorylation.</title>
        <authorList>
            <person name="Hendriks I.A."/>
            <person name="Lyon D."/>
            <person name="Young C."/>
            <person name="Jensen L.J."/>
            <person name="Vertegaal A.C."/>
            <person name="Nielsen M.L."/>
        </authorList>
    </citation>
    <scope>SUMOYLATION [LARGE SCALE ANALYSIS] AT LYS-5; LYS-60; LYS-96; LYS-99; LYS-126; LYS-190; LYS-198; LYS-243; LYS-249; LYS-371 AND LYS-467</scope>
    <scope>IDENTIFICATION BY MASS SPECTROMETRY [LARGE SCALE ANALYSIS]</scope>
</reference>
<reference key="44">
    <citation type="journal article" date="2018" name="Cell">
        <title>NONO detects the nuclear HIV capsid to promote cGAS-mediated innate immune activation.</title>
        <authorList>
            <person name="Lahaye X."/>
            <person name="Gentili M."/>
            <person name="Silvin A."/>
            <person name="Conrad C."/>
            <person name="Picard L."/>
            <person name="Jouve M."/>
            <person name="Zueva E."/>
            <person name="Maurin M."/>
            <person name="Nadalin F."/>
            <person name="Knott G.J."/>
            <person name="Zhao B."/>
            <person name="Du F."/>
            <person name="Rio M."/>
            <person name="Amiel J."/>
            <person name="Fox A.H."/>
            <person name="Li P."/>
            <person name="Etienne L."/>
            <person name="Bond C.S."/>
            <person name="Colleaux L."/>
            <person name="Manel N."/>
        </authorList>
    </citation>
    <scope>FUNCTION</scope>
    <scope>INTERACTION WITH HIV-1 CAPSID PROTEIN P24 (MICROBIAL INFECTION)</scope>
    <scope>INTERACTION WITH HIV-2 CAPSID PROTEIN P24 (MICROBIAL INFECTION)</scope>
</reference>
<reference key="45">
    <citation type="journal article" date="2012" name="Proc. Natl. Acad. Sci. U.S.A.">
        <title>Structure of the heterodimer of human NONO and paraspeckle protein component 1 and analysis of its role in subnuclear body formation.</title>
        <authorList>
            <person name="Passon D.M."/>
            <person name="Lee M."/>
            <person name="Rackham O."/>
            <person name="Stanley W.A."/>
            <person name="Sadowska A."/>
            <person name="Filipovska A."/>
            <person name="Fox A.H."/>
            <person name="Bond C.S."/>
        </authorList>
    </citation>
    <scope>X-RAY CRYSTALLOGRAPHY (1.9 ANGSTROMS) OF 53-312 IN COMPLEX WITH PSPC1</scope>
    <scope>FUNCTION</scope>
    <scope>SUBCELLULAR LOCATION</scope>
    <scope>MUTAGENESIS OF TYR-267 AND TRP-271</scope>
</reference>
<reference key="46">
    <citation type="journal article" date="2015" name="Nat. Neurosci.">
        <title>Mutations in NONO lead to syndromic intellectual disability and inhibitory synaptic defects.</title>
        <authorList>
            <consortium name="DDD Study"/>
            <person name="Mircsof D."/>
            <person name="Langouet M."/>
            <person name="Rio M."/>
            <person name="Moutton S."/>
            <person name="Siquier-Pernet K."/>
            <person name="Bole-Feysot C."/>
            <person name="Cagnard N."/>
            <person name="Nitschke P."/>
            <person name="Gaspar L."/>
            <person name="Znidaric M."/>
            <person name="Alibeu O."/>
            <person name="Fritz A.K."/>
            <person name="Wolfer D.P."/>
            <person name="Schroeter A."/>
            <person name="Bosshard G."/>
            <person name="Rudin M."/>
            <person name="Koester C."/>
            <person name="Crestani F."/>
            <person name="Seebeck P."/>
            <person name="Boddaert N."/>
            <person name="Prescott K."/>
            <person name="Hines R."/>
            <person name="Moss S.J."/>
            <person name="Fritschy J.M."/>
            <person name="Munnich A."/>
            <person name="Amiel J."/>
            <person name="Brown S.A."/>
            <person name="Tyagarajan S.K."/>
            <person name="Colleaux L."/>
        </authorList>
    </citation>
    <scope>INVOLVEMENT IN MRXS34</scope>
    <scope>FUNCTION</scope>
</reference>
<sequence length="471" mass="54232">MQSNKTFNLEKQNHTPRKHHQHHHQQQHHQQQQQQPPPPPIPANGQQASSQNEGLTIDLKNFRKPGEKTFTQRSRLFVGNLPPDITEEEMRKLFEKYGKAGEVFIHKDKGFGFIRLETRTLAEIAKVELDNMPLRGKQLRVRFACHSASLTVRNLPQYVSNELLEEAFSVFGQVERAVVIVDDRGRPSGKGIVEFSGKPAARKALDRCSEGSFLLTTFPRPVTVEPMDQLDDEEGLPEKLVIKNQQFHKEREQPPRFAQPGSFEYEYAMRWKALIEMEKQQQDQVDRNIKEAREKLEMEMEAARHEHQVMLMRQDLMRRQEELRRMEELHNQEVQKRKQLELRQEEERRRREEEMRRQQEEMMRRQQEGFKGTFPDAREQEIRMGQMAMGGAMGINNRGAMPPAPVPAGTPAPPGPATMMPDGTLGLTPPTTERFGQAATMEGIGAIGGTPPAFNRAAPGAEFAPNKRRRY</sequence>
<dbReference type="EMBL" id="L14599">
    <property type="protein sequence ID" value="AAC37578.1"/>
    <property type="molecule type" value="mRNA"/>
</dbReference>
<dbReference type="EMBL" id="U89867">
    <property type="protein sequence ID" value="AAC51852.1"/>
    <property type="molecule type" value="mRNA"/>
</dbReference>
<dbReference type="EMBL" id="Y11289">
    <property type="protein sequence ID" value="CAA72157.1"/>
    <property type="molecule type" value="Genomic_DNA"/>
</dbReference>
<dbReference type="EMBL" id="Y11290">
    <property type="protein sequence ID" value="CAA72157.1"/>
    <property type="status" value="JOINED"/>
    <property type="molecule type" value="Genomic_DNA"/>
</dbReference>
<dbReference type="EMBL" id="Y11291">
    <property type="protein sequence ID" value="CAA72157.1"/>
    <property type="status" value="JOINED"/>
    <property type="molecule type" value="Genomic_DNA"/>
</dbReference>
<dbReference type="EMBL" id="Y11292">
    <property type="protein sequence ID" value="CAA72157.1"/>
    <property type="status" value="JOINED"/>
    <property type="molecule type" value="Genomic_DNA"/>
</dbReference>
<dbReference type="EMBL" id="Y11293">
    <property type="protein sequence ID" value="CAA72157.1"/>
    <property type="status" value="JOINED"/>
    <property type="molecule type" value="Genomic_DNA"/>
</dbReference>
<dbReference type="EMBL" id="Y11294">
    <property type="protein sequence ID" value="CAA72157.1"/>
    <property type="status" value="JOINED"/>
    <property type="molecule type" value="Genomic_DNA"/>
</dbReference>
<dbReference type="EMBL" id="Y11295">
    <property type="protein sequence ID" value="CAA72157.1"/>
    <property type="status" value="JOINED"/>
    <property type="molecule type" value="Genomic_DNA"/>
</dbReference>
<dbReference type="EMBL" id="Y11296">
    <property type="protein sequence ID" value="CAA72157.1"/>
    <property type="status" value="JOINED"/>
    <property type="molecule type" value="Genomic_DNA"/>
</dbReference>
<dbReference type="EMBL" id="Y11297">
    <property type="protein sequence ID" value="CAA72157.1"/>
    <property type="status" value="JOINED"/>
    <property type="molecule type" value="Genomic_DNA"/>
</dbReference>
<dbReference type="EMBL" id="Y11298">
    <property type="protein sequence ID" value="CAA72157.1"/>
    <property type="status" value="JOINED"/>
    <property type="molecule type" value="Genomic_DNA"/>
</dbReference>
<dbReference type="EMBL" id="U02493">
    <property type="protein sequence ID" value="AAA03427.1"/>
    <property type="molecule type" value="mRNA"/>
</dbReference>
<dbReference type="EMBL" id="AK297144">
    <property type="protein sequence ID" value="BAH12508.1"/>
    <property type="molecule type" value="mRNA"/>
</dbReference>
<dbReference type="EMBL" id="CR456761">
    <property type="protein sequence ID" value="CAG33042.1"/>
    <property type="molecule type" value="mRNA"/>
</dbReference>
<dbReference type="EMBL" id="AL590762">
    <property type="status" value="NOT_ANNOTATED_CDS"/>
    <property type="molecule type" value="Genomic_DNA"/>
</dbReference>
<dbReference type="EMBL" id="CH471132">
    <property type="protein sequence ID" value="EAX05298.1"/>
    <property type="molecule type" value="Genomic_DNA"/>
</dbReference>
<dbReference type="EMBL" id="CH471132">
    <property type="protein sequence ID" value="EAX05299.1"/>
    <property type="molecule type" value="Genomic_DNA"/>
</dbReference>
<dbReference type="EMBL" id="CH471132">
    <property type="protein sequence ID" value="EAX05300.1"/>
    <property type="molecule type" value="Genomic_DNA"/>
</dbReference>
<dbReference type="EMBL" id="BC002364">
    <property type="protein sequence ID" value="AAH02364.1"/>
    <property type="molecule type" value="mRNA"/>
</dbReference>
<dbReference type="EMBL" id="BC003129">
    <property type="protein sequence ID" value="AAH03129.1"/>
    <property type="molecule type" value="mRNA"/>
</dbReference>
<dbReference type="EMBL" id="BC012141">
    <property type="protein sequence ID" value="AAH12141.1"/>
    <property type="molecule type" value="mRNA"/>
</dbReference>
<dbReference type="EMBL" id="BC028299">
    <property type="protein sequence ID" value="AAH28299.1"/>
    <property type="molecule type" value="mRNA"/>
</dbReference>
<dbReference type="EMBL" id="BC069616">
    <property type="protein sequence ID" value="AAH69616.1"/>
    <property type="molecule type" value="mRNA"/>
</dbReference>
<dbReference type="EMBL" id="BC069639">
    <property type="protein sequence ID" value="AAH69639.1"/>
    <property type="molecule type" value="mRNA"/>
</dbReference>
<dbReference type="CCDS" id="CCDS14410.1">
    <molecule id="Q15233-1"/>
</dbReference>
<dbReference type="CCDS" id="CCDS55445.1">
    <molecule id="Q15233-2"/>
</dbReference>
<dbReference type="PIR" id="G01211">
    <property type="entry name" value="G01211"/>
</dbReference>
<dbReference type="PIR" id="S29769">
    <property type="entry name" value="S29769"/>
</dbReference>
<dbReference type="PIR" id="S41768">
    <property type="entry name" value="S41768"/>
</dbReference>
<dbReference type="RefSeq" id="NP_001138880.1">
    <molecule id="Q15233-1"/>
    <property type="nucleotide sequence ID" value="NM_001145408.2"/>
</dbReference>
<dbReference type="RefSeq" id="NP_001138881.1">
    <molecule id="Q15233-1"/>
    <property type="nucleotide sequence ID" value="NM_001145409.2"/>
</dbReference>
<dbReference type="RefSeq" id="NP_001138882.1">
    <molecule id="Q15233-2"/>
    <property type="nucleotide sequence ID" value="NM_001145410.2"/>
</dbReference>
<dbReference type="RefSeq" id="NP_031389.3">
    <molecule id="Q15233-1"/>
    <property type="nucleotide sequence ID" value="NM_007363.4"/>
</dbReference>
<dbReference type="PDB" id="3SDE">
    <property type="method" value="X-ray"/>
    <property type="resolution" value="1.90 A"/>
    <property type="chains" value="B=53-312"/>
</dbReference>
<dbReference type="PDB" id="5IFM">
    <property type="method" value="X-ray"/>
    <property type="resolution" value="2.60 A"/>
    <property type="chains" value="A/B/C/D/E/F/G/H/I/J/K/L=53-312"/>
</dbReference>
<dbReference type="PDB" id="6WMZ">
    <property type="method" value="X-ray"/>
    <property type="resolution" value="2.85 A"/>
    <property type="chains" value="B/D=53-312"/>
</dbReference>
<dbReference type="PDB" id="7LRQ">
    <property type="method" value="X-ray"/>
    <property type="resolution" value="2.30 A"/>
    <property type="chains" value="B=53-312"/>
</dbReference>
<dbReference type="PDB" id="7LRU">
    <property type="method" value="X-ray"/>
    <property type="resolution" value="1.60 A"/>
    <property type="chains" value="B=234-281"/>
</dbReference>
<dbReference type="PDB" id="7PU5">
    <property type="method" value="X-ray"/>
    <property type="resolution" value="3.00 A"/>
    <property type="chains" value="A/C/E/G/I/K=54-312"/>
</dbReference>
<dbReference type="PDBsum" id="3SDE"/>
<dbReference type="PDBsum" id="5IFM"/>
<dbReference type="PDBsum" id="6WMZ"/>
<dbReference type="PDBsum" id="7LRQ"/>
<dbReference type="PDBsum" id="7LRU"/>
<dbReference type="PDBsum" id="7PU5"/>
<dbReference type="BMRB" id="Q15233"/>
<dbReference type="SASBDB" id="Q15233"/>
<dbReference type="SMR" id="Q15233"/>
<dbReference type="BioGRID" id="110904">
    <property type="interactions" value="556"/>
</dbReference>
<dbReference type="ComplexPortal" id="CPX-7765">
    <property type="entry name" value="SFPQ-NONO RNA-binding complex"/>
</dbReference>
<dbReference type="ComplexPortal" id="CPX-7781">
    <property type="entry name" value="NONO RNA-binding homodimer"/>
</dbReference>
<dbReference type="ComplexPortal" id="CPX-889">
    <property type="entry name" value="NONO-PSPC1 RNA-binding complex"/>
</dbReference>
<dbReference type="CORUM" id="Q15233"/>
<dbReference type="DIP" id="DIP-29951N"/>
<dbReference type="FunCoup" id="Q15233">
    <property type="interactions" value="3797"/>
</dbReference>
<dbReference type="IntAct" id="Q15233">
    <property type="interactions" value="402"/>
</dbReference>
<dbReference type="MINT" id="Q15233"/>
<dbReference type="STRING" id="9606.ENSP00000276079"/>
<dbReference type="GlyCosmos" id="Q15233">
    <property type="glycosylation" value="1 site, 1 glycan"/>
</dbReference>
<dbReference type="GlyGen" id="Q15233">
    <property type="glycosylation" value="4 sites, 1 O-linked glycan (2 sites)"/>
</dbReference>
<dbReference type="iPTMnet" id="Q15233"/>
<dbReference type="MetOSite" id="Q15233"/>
<dbReference type="PhosphoSitePlus" id="Q15233"/>
<dbReference type="SwissPalm" id="Q15233"/>
<dbReference type="BioMuta" id="NONO"/>
<dbReference type="DMDM" id="67469924"/>
<dbReference type="REPRODUCTION-2DPAGE" id="IPI00304596"/>
<dbReference type="jPOST" id="Q15233"/>
<dbReference type="MassIVE" id="Q15233"/>
<dbReference type="PaxDb" id="9606-ENSP00000276079"/>
<dbReference type="PeptideAtlas" id="Q15233"/>
<dbReference type="ProteomicsDB" id="24887"/>
<dbReference type="ProteomicsDB" id="60494">
    <molecule id="Q15233-1"/>
</dbReference>
<dbReference type="Pumba" id="Q15233"/>
<dbReference type="TopDownProteomics" id="Q15233-1">
    <molecule id="Q15233-1"/>
</dbReference>
<dbReference type="ABCD" id="Q15233">
    <property type="antibodies" value="3 sequenced antibodies"/>
</dbReference>
<dbReference type="Antibodypedia" id="13516">
    <property type="antibodies" value="582 antibodies from 42 providers"/>
</dbReference>
<dbReference type="DNASU" id="4841"/>
<dbReference type="Ensembl" id="ENST00000276079.13">
    <molecule id="Q15233-1"/>
    <property type="protein sequence ID" value="ENSP00000276079.8"/>
    <property type="gene ID" value="ENSG00000147140.17"/>
</dbReference>
<dbReference type="Ensembl" id="ENST00000373841.5">
    <molecule id="Q15233-1"/>
    <property type="protein sequence ID" value="ENSP00000362947.1"/>
    <property type="gene ID" value="ENSG00000147140.17"/>
</dbReference>
<dbReference type="Ensembl" id="ENST00000420903.6">
    <molecule id="Q15233-1"/>
    <property type="protein sequence ID" value="ENSP00000410299.2"/>
    <property type="gene ID" value="ENSG00000147140.17"/>
</dbReference>
<dbReference type="Ensembl" id="ENST00000450092.6">
    <molecule id="Q15233-1"/>
    <property type="protein sequence ID" value="ENSP00000415777.2"/>
    <property type="gene ID" value="ENSG00000147140.17"/>
</dbReference>
<dbReference type="Ensembl" id="ENST00000454976.2">
    <molecule id="Q15233-1"/>
    <property type="protein sequence ID" value="ENSP00000406673.2"/>
    <property type="gene ID" value="ENSG00000147140.17"/>
</dbReference>
<dbReference type="Ensembl" id="ENST00000535149.5">
    <molecule id="Q15233-2"/>
    <property type="protein sequence ID" value="ENSP00000441364.1"/>
    <property type="gene ID" value="ENSG00000147140.17"/>
</dbReference>
<dbReference type="Ensembl" id="ENST00000676797.1">
    <molecule id="Q15233-2"/>
    <property type="protein sequence ID" value="ENSP00000503920.1"/>
    <property type="gene ID" value="ENSG00000147140.17"/>
</dbReference>
<dbReference type="Ensembl" id="ENST00000677274.1">
    <molecule id="Q15233-1"/>
    <property type="protein sequence ID" value="ENSP00000504314.1"/>
    <property type="gene ID" value="ENSG00000147140.17"/>
</dbReference>
<dbReference type="Ensembl" id="ENST00000677446.1">
    <molecule id="Q15233-1"/>
    <property type="protein sequence ID" value="ENSP00000503031.1"/>
    <property type="gene ID" value="ENSG00000147140.17"/>
</dbReference>
<dbReference type="Ensembl" id="ENST00000677612.1">
    <molecule id="Q15233-1"/>
    <property type="protein sequence ID" value="ENSP00000504351.1"/>
    <property type="gene ID" value="ENSG00000147140.17"/>
</dbReference>
<dbReference type="Ensembl" id="ENST00000678231.1">
    <molecule id="Q15233-1"/>
    <property type="protein sequence ID" value="ENSP00000503233.1"/>
    <property type="gene ID" value="ENSG00000147140.17"/>
</dbReference>
<dbReference type="GeneID" id="4841"/>
<dbReference type="KEGG" id="hsa:4841"/>
<dbReference type="MANE-Select" id="ENST00000276079.13">
    <property type="protein sequence ID" value="ENSP00000276079.8"/>
    <property type="RefSeq nucleotide sequence ID" value="NM_007363.5"/>
    <property type="RefSeq protein sequence ID" value="NP_031389.3"/>
</dbReference>
<dbReference type="UCSC" id="uc004dzn.5">
    <molecule id="Q15233-1"/>
    <property type="organism name" value="human"/>
</dbReference>
<dbReference type="AGR" id="HGNC:7871"/>
<dbReference type="CTD" id="4841"/>
<dbReference type="DisGeNET" id="4841"/>
<dbReference type="GeneCards" id="NONO"/>
<dbReference type="HGNC" id="HGNC:7871">
    <property type="gene designation" value="NONO"/>
</dbReference>
<dbReference type="HPA" id="ENSG00000147140">
    <property type="expression patterns" value="Low tissue specificity"/>
</dbReference>
<dbReference type="MalaCards" id="NONO"/>
<dbReference type="MIM" id="300084">
    <property type="type" value="gene"/>
</dbReference>
<dbReference type="MIM" id="300967">
    <property type="type" value="phenotype"/>
</dbReference>
<dbReference type="neXtProt" id="NX_Q15233"/>
<dbReference type="OpenTargets" id="ENSG00000147140"/>
<dbReference type="Orphanet" id="466791">
    <property type="disease" value="Macrocephaly-intellectual disability-left ventricular non compaction syndrome"/>
</dbReference>
<dbReference type="Orphanet" id="319308">
    <property type="disease" value="MiT family translocation renal cell carcinoma"/>
</dbReference>
<dbReference type="PharmGKB" id="PA31680"/>
<dbReference type="VEuPathDB" id="HostDB:ENSG00000147140"/>
<dbReference type="eggNOG" id="KOG0115">
    <property type="taxonomic scope" value="Eukaryota"/>
</dbReference>
<dbReference type="GeneTree" id="ENSGT00940000154442"/>
<dbReference type="HOGENOM" id="CLU_027185_2_0_1"/>
<dbReference type="InParanoid" id="Q15233"/>
<dbReference type="OMA" id="HGMAMNR"/>
<dbReference type="OrthoDB" id="10067824at2759"/>
<dbReference type="PAN-GO" id="Q15233">
    <property type="GO annotations" value="2 GO annotations based on evolutionary models"/>
</dbReference>
<dbReference type="PhylomeDB" id="Q15233"/>
<dbReference type="TreeFam" id="TF315795"/>
<dbReference type="PathwayCommons" id="Q15233"/>
<dbReference type="SignaLink" id="Q15233"/>
<dbReference type="SIGNOR" id="Q15233"/>
<dbReference type="BioGRID-ORCS" id="4841">
    <property type="hits" value="61 hits in 798 CRISPR screens"/>
</dbReference>
<dbReference type="CD-CODE" id="1A18FFC4">
    <property type="entry name" value="Paraspeckle"/>
</dbReference>
<dbReference type="CD-CODE" id="232F8A39">
    <property type="entry name" value="P-body"/>
</dbReference>
<dbReference type="CD-CODE" id="804901D1">
    <property type="entry name" value="Nuclear speckle"/>
</dbReference>
<dbReference type="CD-CODE" id="91857CE7">
    <property type="entry name" value="Nucleolus"/>
</dbReference>
<dbReference type="CD-CODE" id="D8E9712B">
    <property type="entry name" value="Neuronal RNP granule"/>
</dbReference>
<dbReference type="CD-CODE" id="DEE660B4">
    <property type="entry name" value="Stress granule"/>
</dbReference>
<dbReference type="ChiTaRS" id="NONO">
    <property type="organism name" value="human"/>
</dbReference>
<dbReference type="EvolutionaryTrace" id="Q15233"/>
<dbReference type="GeneWiki" id="NONO"/>
<dbReference type="GenomeRNAi" id="4841"/>
<dbReference type="Pharos" id="Q15233">
    <property type="development level" value="Tbio"/>
</dbReference>
<dbReference type="PRO" id="PR:Q15233"/>
<dbReference type="Proteomes" id="UP000005640">
    <property type="component" value="Chromosome X"/>
</dbReference>
<dbReference type="RNAct" id="Q15233">
    <property type="molecule type" value="protein"/>
</dbReference>
<dbReference type="Bgee" id="ENSG00000147140">
    <property type="expression patterns" value="Expressed in oviduct epithelium and 123 other cell types or tissues"/>
</dbReference>
<dbReference type="ExpressionAtlas" id="Q15233">
    <property type="expression patterns" value="baseline and differential"/>
</dbReference>
<dbReference type="GO" id="GO:0005694">
    <property type="term" value="C:chromosome"/>
    <property type="evidence" value="ECO:0007669"/>
    <property type="project" value="UniProtKB-SubCell"/>
</dbReference>
<dbReference type="GO" id="GO:0001650">
    <property type="term" value="C:fibrillar center"/>
    <property type="evidence" value="ECO:0000314"/>
    <property type="project" value="HPA"/>
</dbReference>
<dbReference type="GO" id="GO:0016020">
    <property type="term" value="C:membrane"/>
    <property type="evidence" value="ECO:0007005"/>
    <property type="project" value="UniProtKB"/>
</dbReference>
<dbReference type="GO" id="GO:0016363">
    <property type="term" value="C:nuclear matrix"/>
    <property type="evidence" value="ECO:0000314"/>
    <property type="project" value="BHF-UCL"/>
</dbReference>
<dbReference type="GO" id="GO:0016607">
    <property type="term" value="C:nuclear speck"/>
    <property type="evidence" value="ECO:0007669"/>
    <property type="project" value="UniProtKB-SubCell"/>
</dbReference>
<dbReference type="GO" id="GO:0005654">
    <property type="term" value="C:nucleoplasm"/>
    <property type="evidence" value="ECO:0000314"/>
    <property type="project" value="HPA"/>
</dbReference>
<dbReference type="GO" id="GO:0005634">
    <property type="term" value="C:nucleus"/>
    <property type="evidence" value="ECO:0000314"/>
    <property type="project" value="ParkinsonsUK-UCL"/>
</dbReference>
<dbReference type="GO" id="GO:0042382">
    <property type="term" value="C:paraspeckles"/>
    <property type="evidence" value="ECO:0000314"/>
    <property type="project" value="MGI"/>
</dbReference>
<dbReference type="GO" id="GO:0090575">
    <property type="term" value="C:RNA polymerase II transcription regulator complex"/>
    <property type="evidence" value="ECO:0000250"/>
    <property type="project" value="BHF-UCL"/>
</dbReference>
<dbReference type="GO" id="GO:0003682">
    <property type="term" value="F:chromatin binding"/>
    <property type="evidence" value="ECO:0000250"/>
    <property type="project" value="BHF-UCL"/>
</dbReference>
<dbReference type="GO" id="GO:0003677">
    <property type="term" value="F:DNA binding"/>
    <property type="evidence" value="ECO:0007669"/>
    <property type="project" value="UniProtKB-KW"/>
</dbReference>
<dbReference type="GO" id="GO:0042802">
    <property type="term" value="F:identical protein binding"/>
    <property type="evidence" value="ECO:0000353"/>
    <property type="project" value="IntAct"/>
</dbReference>
<dbReference type="GO" id="GO:0106222">
    <property type="term" value="F:lncRNA binding"/>
    <property type="evidence" value="ECO:0007669"/>
    <property type="project" value="Ensembl"/>
</dbReference>
<dbReference type="GO" id="GO:0003723">
    <property type="term" value="F:RNA binding"/>
    <property type="evidence" value="ECO:0007005"/>
    <property type="project" value="UniProtKB"/>
</dbReference>
<dbReference type="GO" id="GO:0002218">
    <property type="term" value="P:activation of innate immune response"/>
    <property type="evidence" value="ECO:0000314"/>
    <property type="project" value="UniProtKB"/>
</dbReference>
<dbReference type="GO" id="GO:1904385">
    <property type="term" value="P:cellular response to angiotensin"/>
    <property type="evidence" value="ECO:0007669"/>
    <property type="project" value="Ensembl"/>
</dbReference>
<dbReference type="GO" id="GO:0071456">
    <property type="term" value="P:cellular response to hypoxia"/>
    <property type="evidence" value="ECO:0007669"/>
    <property type="project" value="Ensembl"/>
</dbReference>
<dbReference type="GO" id="GO:0007623">
    <property type="term" value="P:circadian rhythm"/>
    <property type="evidence" value="ECO:0000250"/>
    <property type="project" value="UniProtKB"/>
</dbReference>
<dbReference type="GO" id="GO:0006310">
    <property type="term" value="P:DNA recombination"/>
    <property type="evidence" value="ECO:0007669"/>
    <property type="project" value="UniProtKB-KW"/>
</dbReference>
<dbReference type="GO" id="GO:0006281">
    <property type="term" value="P:DNA repair"/>
    <property type="evidence" value="ECO:0007669"/>
    <property type="project" value="UniProtKB-KW"/>
</dbReference>
<dbReference type="GO" id="GO:0045087">
    <property type="term" value="P:innate immune response"/>
    <property type="evidence" value="ECO:0007669"/>
    <property type="project" value="UniProtKB-KW"/>
</dbReference>
<dbReference type="GO" id="GO:0006397">
    <property type="term" value="P:mRNA processing"/>
    <property type="evidence" value="ECO:0000304"/>
    <property type="project" value="ProtInc"/>
</dbReference>
<dbReference type="GO" id="GO:0045892">
    <property type="term" value="P:negative regulation of DNA-templated transcription"/>
    <property type="evidence" value="ECO:0000250"/>
    <property type="project" value="UniProtKB"/>
</dbReference>
<dbReference type="GO" id="GO:1903377">
    <property type="term" value="P:negative regulation of oxidative stress-induced neuron intrinsic apoptotic signaling pathway"/>
    <property type="evidence" value="ECO:0000314"/>
    <property type="project" value="ParkinsonsUK-UCL"/>
</dbReference>
<dbReference type="GO" id="GO:0042752">
    <property type="term" value="P:regulation of circadian rhythm"/>
    <property type="evidence" value="ECO:0000250"/>
    <property type="project" value="UniProtKB"/>
</dbReference>
<dbReference type="GO" id="GO:0006355">
    <property type="term" value="P:regulation of DNA-templated transcription"/>
    <property type="evidence" value="ECO:0000318"/>
    <property type="project" value="GO_Central"/>
</dbReference>
<dbReference type="GO" id="GO:0008380">
    <property type="term" value="P:RNA splicing"/>
    <property type="evidence" value="ECO:0000304"/>
    <property type="project" value="ProtInc"/>
</dbReference>
<dbReference type="CDD" id="cd12946">
    <property type="entry name" value="NOPS_p54nrb_PSF_PSPC1"/>
    <property type="match status" value="1"/>
</dbReference>
<dbReference type="CDD" id="cd12588">
    <property type="entry name" value="RRM1_p54nrb"/>
    <property type="match status" value="1"/>
</dbReference>
<dbReference type="FunFam" id="3.30.70.330:FF:000226">
    <property type="entry name" value="Non-POU domain-containing octamer-binding protein"/>
    <property type="match status" value="1"/>
</dbReference>
<dbReference type="FunFam" id="3.30.70.330:FF:000043">
    <property type="entry name" value="paraspeckle component 1 isoform X1"/>
    <property type="match status" value="1"/>
</dbReference>
<dbReference type="Gene3D" id="3.30.70.330">
    <property type="match status" value="2"/>
</dbReference>
<dbReference type="Gene3D" id="6.10.250.1170">
    <property type="match status" value="1"/>
</dbReference>
<dbReference type="InterPro" id="IPR012975">
    <property type="entry name" value="NOPS"/>
</dbReference>
<dbReference type="InterPro" id="IPR012677">
    <property type="entry name" value="Nucleotide-bd_a/b_plait_sf"/>
</dbReference>
<dbReference type="InterPro" id="IPR034552">
    <property type="entry name" value="p54nrb_RRM1"/>
</dbReference>
<dbReference type="InterPro" id="IPR035979">
    <property type="entry name" value="RBD_domain_sf"/>
</dbReference>
<dbReference type="InterPro" id="IPR000504">
    <property type="entry name" value="RRM_dom"/>
</dbReference>
<dbReference type="PANTHER" id="PTHR23189">
    <property type="entry name" value="RNA RECOGNITION MOTIF-CONTAINING"/>
    <property type="match status" value="1"/>
</dbReference>
<dbReference type="Pfam" id="PF08075">
    <property type="entry name" value="NOPS"/>
    <property type="match status" value="1"/>
</dbReference>
<dbReference type="Pfam" id="PF00076">
    <property type="entry name" value="RRM_1"/>
    <property type="match status" value="2"/>
</dbReference>
<dbReference type="SMART" id="SM00360">
    <property type="entry name" value="RRM"/>
    <property type="match status" value="2"/>
</dbReference>
<dbReference type="SUPFAM" id="SSF54928">
    <property type="entry name" value="RNA-binding domain, RBD"/>
    <property type="match status" value="1"/>
</dbReference>
<dbReference type="PROSITE" id="PS50102">
    <property type="entry name" value="RRM"/>
    <property type="match status" value="2"/>
</dbReference>